<reference key="1">
    <citation type="journal article" date="1987" name="Proc. Natl. Acad. Sci. U.S.A.">
        <title>Complete cDNA and derived amino acid sequence of human factor V.</title>
        <authorList>
            <person name="Jenny R.J."/>
            <person name="Pittman D.D."/>
            <person name="Toole J.J."/>
            <person name="Kriz R.W."/>
            <person name="Aldape R.A."/>
            <person name="Hewick R.M."/>
            <person name="Kaufman R.J."/>
            <person name="Mann K.G."/>
        </authorList>
    </citation>
    <scope>NUCLEOTIDE SEQUENCE [MRNA]</scope>
    <scope>PROTEOLYTIC CLEAVAGE AT ARG-737; ARG-1046 AND ARG-1573 BY THROMBIN</scope>
    <scope>VARIANTS ARG-858; ARG-865; GLU-925; PHE-1397 AND VAL-1764</scope>
</reference>
<reference key="2">
    <citation type="journal article" date="1992" name="Biochemistry">
        <title>Structure of the gene for human coagulation factor V.</title>
        <authorList>
            <person name="Cripe L.D."/>
            <person name="Moore K.D."/>
            <person name="Kane W.H."/>
        </authorList>
    </citation>
    <scope>NUCLEOTIDE SEQUENCE [GENOMIC DNA]</scope>
</reference>
<reference key="3">
    <citation type="submission" date="2003-08" db="EMBL/GenBank/DDBJ databases">
        <authorList>
            <consortium name="SeattleSNPs variation discovery resource"/>
        </authorList>
    </citation>
    <scope>NUCLEOTIDE SEQUENCE [GENOMIC DNA]</scope>
    <scope>VARIANT THPH2 GLN-534</scope>
    <scope>VARIANTS SER-15; HIS-107; THR-413; LYS-513; SER-809; THR-817; ARG-858; ARG-865; SER-915; GLU-925; SER-969; LEU-980; GLN-1146; ILE-1285; SER-1404; ALA-1530 AND THR-2148</scope>
</reference>
<reference key="4">
    <citation type="journal article" date="2006" name="Nature">
        <title>The DNA sequence and biological annotation of human chromosome 1.</title>
        <authorList>
            <person name="Gregory S.G."/>
            <person name="Barlow K.F."/>
            <person name="McLay K.E."/>
            <person name="Kaul R."/>
            <person name="Swarbreck D."/>
            <person name="Dunham A."/>
            <person name="Scott C.E."/>
            <person name="Howe K.L."/>
            <person name="Woodfine K."/>
            <person name="Spencer C.C.A."/>
            <person name="Jones M.C."/>
            <person name="Gillson C."/>
            <person name="Searle S."/>
            <person name="Zhou Y."/>
            <person name="Kokocinski F."/>
            <person name="McDonald L."/>
            <person name="Evans R."/>
            <person name="Phillips K."/>
            <person name="Atkinson A."/>
            <person name="Cooper R."/>
            <person name="Jones C."/>
            <person name="Hall R.E."/>
            <person name="Andrews T.D."/>
            <person name="Lloyd C."/>
            <person name="Ainscough R."/>
            <person name="Almeida J.P."/>
            <person name="Ambrose K.D."/>
            <person name="Anderson F."/>
            <person name="Andrew R.W."/>
            <person name="Ashwell R.I.S."/>
            <person name="Aubin K."/>
            <person name="Babbage A.K."/>
            <person name="Bagguley C.L."/>
            <person name="Bailey J."/>
            <person name="Beasley H."/>
            <person name="Bethel G."/>
            <person name="Bird C.P."/>
            <person name="Bray-Allen S."/>
            <person name="Brown J.Y."/>
            <person name="Brown A.J."/>
            <person name="Buckley D."/>
            <person name="Burton J."/>
            <person name="Bye J."/>
            <person name="Carder C."/>
            <person name="Chapman J.C."/>
            <person name="Clark S.Y."/>
            <person name="Clarke G."/>
            <person name="Clee C."/>
            <person name="Cobley V."/>
            <person name="Collier R.E."/>
            <person name="Corby N."/>
            <person name="Coville G.J."/>
            <person name="Davies J."/>
            <person name="Deadman R."/>
            <person name="Dunn M."/>
            <person name="Earthrowl M."/>
            <person name="Ellington A.G."/>
            <person name="Errington H."/>
            <person name="Frankish A."/>
            <person name="Frankland J."/>
            <person name="French L."/>
            <person name="Garner P."/>
            <person name="Garnett J."/>
            <person name="Gay L."/>
            <person name="Ghori M.R.J."/>
            <person name="Gibson R."/>
            <person name="Gilby L.M."/>
            <person name="Gillett W."/>
            <person name="Glithero R.J."/>
            <person name="Grafham D.V."/>
            <person name="Griffiths C."/>
            <person name="Griffiths-Jones S."/>
            <person name="Grocock R."/>
            <person name="Hammond S."/>
            <person name="Harrison E.S.I."/>
            <person name="Hart E."/>
            <person name="Haugen E."/>
            <person name="Heath P.D."/>
            <person name="Holmes S."/>
            <person name="Holt K."/>
            <person name="Howden P.J."/>
            <person name="Hunt A.R."/>
            <person name="Hunt S.E."/>
            <person name="Hunter G."/>
            <person name="Isherwood J."/>
            <person name="James R."/>
            <person name="Johnson C."/>
            <person name="Johnson D."/>
            <person name="Joy A."/>
            <person name="Kay M."/>
            <person name="Kershaw J.K."/>
            <person name="Kibukawa M."/>
            <person name="Kimberley A.M."/>
            <person name="King A."/>
            <person name="Knights A.J."/>
            <person name="Lad H."/>
            <person name="Laird G."/>
            <person name="Lawlor S."/>
            <person name="Leongamornlert D.A."/>
            <person name="Lloyd D.M."/>
            <person name="Loveland J."/>
            <person name="Lovell J."/>
            <person name="Lush M.J."/>
            <person name="Lyne R."/>
            <person name="Martin S."/>
            <person name="Mashreghi-Mohammadi M."/>
            <person name="Matthews L."/>
            <person name="Matthews N.S.W."/>
            <person name="McLaren S."/>
            <person name="Milne S."/>
            <person name="Mistry S."/>
            <person name="Moore M.J.F."/>
            <person name="Nickerson T."/>
            <person name="O'Dell C.N."/>
            <person name="Oliver K."/>
            <person name="Palmeiri A."/>
            <person name="Palmer S.A."/>
            <person name="Parker A."/>
            <person name="Patel D."/>
            <person name="Pearce A.V."/>
            <person name="Peck A.I."/>
            <person name="Pelan S."/>
            <person name="Phelps K."/>
            <person name="Phillimore B.J."/>
            <person name="Plumb R."/>
            <person name="Rajan J."/>
            <person name="Raymond C."/>
            <person name="Rouse G."/>
            <person name="Saenphimmachak C."/>
            <person name="Sehra H.K."/>
            <person name="Sheridan E."/>
            <person name="Shownkeen R."/>
            <person name="Sims S."/>
            <person name="Skuce C.D."/>
            <person name="Smith M."/>
            <person name="Steward C."/>
            <person name="Subramanian S."/>
            <person name="Sycamore N."/>
            <person name="Tracey A."/>
            <person name="Tromans A."/>
            <person name="Van Helmond Z."/>
            <person name="Wall M."/>
            <person name="Wallis J.M."/>
            <person name="White S."/>
            <person name="Whitehead S.L."/>
            <person name="Wilkinson J.E."/>
            <person name="Willey D.L."/>
            <person name="Williams H."/>
            <person name="Wilming L."/>
            <person name="Wray P.W."/>
            <person name="Wu Z."/>
            <person name="Coulson A."/>
            <person name="Vaudin M."/>
            <person name="Sulston J.E."/>
            <person name="Durbin R.M."/>
            <person name="Hubbard T."/>
            <person name="Wooster R."/>
            <person name="Dunham I."/>
            <person name="Carter N.P."/>
            <person name="McVean G."/>
            <person name="Ross M.T."/>
            <person name="Harrow J."/>
            <person name="Olson M.V."/>
            <person name="Beck S."/>
            <person name="Rogers J."/>
            <person name="Bentley D.R."/>
        </authorList>
    </citation>
    <scope>NUCLEOTIDE SEQUENCE [LARGE SCALE GENOMIC DNA]</scope>
    <scope>VARIANT THPH2 GLN-534</scope>
</reference>
<reference key="5">
    <citation type="journal article" date="2004" name="Nat. Genet.">
        <title>Complete sequencing and characterization of 21,243 full-length human cDNAs.</title>
        <authorList>
            <person name="Ota T."/>
            <person name="Suzuki Y."/>
            <person name="Nishikawa T."/>
            <person name="Otsuki T."/>
            <person name="Sugiyama T."/>
            <person name="Irie R."/>
            <person name="Wakamatsu A."/>
            <person name="Hayashi K."/>
            <person name="Sato H."/>
            <person name="Nagai K."/>
            <person name="Kimura K."/>
            <person name="Makita H."/>
            <person name="Sekine M."/>
            <person name="Obayashi M."/>
            <person name="Nishi T."/>
            <person name="Shibahara T."/>
            <person name="Tanaka T."/>
            <person name="Ishii S."/>
            <person name="Yamamoto J."/>
            <person name="Saito K."/>
            <person name="Kawai Y."/>
            <person name="Isono Y."/>
            <person name="Nakamura Y."/>
            <person name="Nagahari K."/>
            <person name="Murakami K."/>
            <person name="Yasuda T."/>
            <person name="Iwayanagi T."/>
            <person name="Wagatsuma M."/>
            <person name="Shiratori A."/>
            <person name="Sudo H."/>
            <person name="Hosoiri T."/>
            <person name="Kaku Y."/>
            <person name="Kodaira H."/>
            <person name="Kondo H."/>
            <person name="Sugawara M."/>
            <person name="Takahashi M."/>
            <person name="Kanda K."/>
            <person name="Yokoi T."/>
            <person name="Furuya T."/>
            <person name="Kikkawa E."/>
            <person name="Omura Y."/>
            <person name="Abe K."/>
            <person name="Kamihara K."/>
            <person name="Katsuta N."/>
            <person name="Sato K."/>
            <person name="Tanikawa M."/>
            <person name="Yamazaki M."/>
            <person name="Ninomiya K."/>
            <person name="Ishibashi T."/>
            <person name="Yamashita H."/>
            <person name="Murakawa K."/>
            <person name="Fujimori K."/>
            <person name="Tanai H."/>
            <person name="Kimata M."/>
            <person name="Watanabe M."/>
            <person name="Hiraoka S."/>
            <person name="Chiba Y."/>
            <person name="Ishida S."/>
            <person name="Ono Y."/>
            <person name="Takiguchi S."/>
            <person name="Watanabe S."/>
            <person name="Yosida M."/>
            <person name="Hotuta T."/>
            <person name="Kusano J."/>
            <person name="Kanehori K."/>
            <person name="Takahashi-Fujii A."/>
            <person name="Hara H."/>
            <person name="Tanase T.-O."/>
            <person name="Nomura Y."/>
            <person name="Togiya S."/>
            <person name="Komai F."/>
            <person name="Hara R."/>
            <person name="Takeuchi K."/>
            <person name="Arita M."/>
            <person name="Imose N."/>
            <person name="Musashino K."/>
            <person name="Yuuki H."/>
            <person name="Oshima A."/>
            <person name="Sasaki N."/>
            <person name="Aotsuka S."/>
            <person name="Yoshikawa Y."/>
            <person name="Matsunawa H."/>
            <person name="Ichihara T."/>
            <person name="Shiohata N."/>
            <person name="Sano S."/>
            <person name="Moriya S."/>
            <person name="Momiyama H."/>
            <person name="Satoh N."/>
            <person name="Takami S."/>
            <person name="Terashima Y."/>
            <person name="Suzuki O."/>
            <person name="Nakagawa S."/>
            <person name="Senoh A."/>
            <person name="Mizoguchi H."/>
            <person name="Goto Y."/>
            <person name="Shimizu F."/>
            <person name="Wakebe H."/>
            <person name="Hishigaki H."/>
            <person name="Watanabe T."/>
            <person name="Sugiyama A."/>
            <person name="Takemoto M."/>
            <person name="Kawakami B."/>
            <person name="Yamazaki M."/>
            <person name="Watanabe K."/>
            <person name="Kumagai A."/>
            <person name="Itakura S."/>
            <person name="Fukuzumi Y."/>
            <person name="Fujimori Y."/>
            <person name="Komiyama M."/>
            <person name="Tashiro H."/>
            <person name="Tanigami A."/>
            <person name="Fujiwara T."/>
            <person name="Ono T."/>
            <person name="Yamada K."/>
            <person name="Fujii Y."/>
            <person name="Ozaki K."/>
            <person name="Hirao M."/>
            <person name="Ohmori Y."/>
            <person name="Kawabata A."/>
            <person name="Hikiji T."/>
            <person name="Kobatake N."/>
            <person name="Inagaki H."/>
            <person name="Ikema Y."/>
            <person name="Okamoto S."/>
            <person name="Okitani R."/>
            <person name="Kawakami T."/>
            <person name="Noguchi S."/>
            <person name="Itoh T."/>
            <person name="Shigeta K."/>
            <person name="Senba T."/>
            <person name="Matsumura K."/>
            <person name="Nakajima Y."/>
            <person name="Mizuno T."/>
            <person name="Morinaga M."/>
            <person name="Sasaki M."/>
            <person name="Togashi T."/>
            <person name="Oyama M."/>
            <person name="Hata H."/>
            <person name="Watanabe M."/>
            <person name="Komatsu T."/>
            <person name="Mizushima-Sugano J."/>
            <person name="Satoh T."/>
            <person name="Shirai Y."/>
            <person name="Takahashi Y."/>
            <person name="Nakagawa K."/>
            <person name="Okumura K."/>
            <person name="Nagase T."/>
            <person name="Nomura N."/>
            <person name="Kikuchi H."/>
            <person name="Masuho Y."/>
            <person name="Yamashita R."/>
            <person name="Nakai K."/>
            <person name="Yada T."/>
            <person name="Nakamura Y."/>
            <person name="Ohara O."/>
            <person name="Isogai T."/>
            <person name="Sugano S."/>
        </authorList>
    </citation>
    <scope>NUCLEOTIDE SEQUENCE [LARGE SCALE MRNA] OF 1-1030</scope>
    <scope>VARIANT LYS-513</scope>
    <source>
        <tissue>Placenta</tissue>
    </source>
</reference>
<reference key="6">
    <citation type="journal article" date="1987" name="Biochemistry">
        <title>Cloning of cDNAs coding for the heavy chain region and connecting region of human factor V, a blood coagulation factor with four types of internal repeats.</title>
        <authorList>
            <person name="Kane W.H."/>
            <person name="Ichinose A."/>
            <person name="Hagen F.S."/>
            <person name="Davie E.W."/>
        </authorList>
    </citation>
    <scope>NUCLEOTIDE SEQUENCE [MRNA] OF 1-1600</scope>
    <scope>VARIANTS ARG-858; ARG-865; GLU-925 AND ILE-1285</scope>
</reference>
<reference key="7">
    <citation type="submission" date="2006-01" db="EMBL/GenBank/DDBJ databases">
        <title>Human coagulation factor V, exon 13, missense mutation Asn713Ser.</title>
        <authorList>
            <person name="Kostka H."/>
        </authorList>
    </citation>
    <scope>NUCLEOTIDE SEQUENCE [GENOMIC DNA] OF 658-1598</scope>
</reference>
<reference key="8">
    <citation type="journal article" date="2001" name="Zhonghua Xue Ye Xue Za Zhi">
        <title>Studies on hereditary deficiency of coagulation factor V.</title>
        <authorList>
            <person name="Xie F."/>
            <person name="Cheng F."/>
            <person name="Zhu X."/>
        </authorList>
    </citation>
    <scope>NUCLEOTIDE SEQUENCE [MRNA] OF 660-1598</scope>
    <scope>VARIANTS ARG-858; ARG-865; GLU-925 AND PHE-1397</scope>
</reference>
<reference key="9">
    <citation type="journal article" date="1986" name="Proc. Natl. Acad. Sci. U.S.A.">
        <title>Cloning of a cDNA coding for human factor V, a blood coagulation factor homologous to factor VIII and ceruloplasmin.</title>
        <authorList>
            <person name="Kane W.H."/>
            <person name="Davie E.W."/>
        </authorList>
    </citation>
    <scope>NUCLEOTIDE SEQUENCE [MRNA] OF 1188-1215 AND 1315-2224</scope>
</reference>
<reference key="10">
    <citation type="journal article" date="1993" name="J. Immunol.">
        <title>The serine protease cofactor factor V is synthesized by lymphocytes.</title>
        <authorList>
            <person name="Shen N.L.L."/>
            <person name="Fan S.-T."/>
            <person name="Pyati J."/>
            <person name="Graff R."/>
            <person name="Lapolla R.J."/>
            <person name="Edgington T.S."/>
        </authorList>
    </citation>
    <scope>PARTIAL NUCLEOTIDE SEQUENCE [MRNA]</scope>
    <source>
        <tissue>Fibroblast</tissue>
    </source>
</reference>
<reference key="11">
    <citation type="journal article" date="1984" name="J. Biochem.">
        <title>Mechanism of inhibition of activated protein C by protein C inhibitor.</title>
        <authorList>
            <person name="Suzuki K."/>
            <person name="Nishioka J."/>
            <person name="Kusumoto H."/>
            <person name="Hashimoto S."/>
        </authorList>
    </citation>
    <scope>ACTIVITY REGULATION</scope>
    <scope>HETERODIMER WITH SERPINA5</scope>
</reference>
<reference key="12">
    <citation type="journal article" date="1984" name="J. Biol. Chem.">
        <title>Coagulation Factor V contains copper ion.</title>
        <authorList>
            <person name="Mann K.G."/>
            <person name="Lawler C.M."/>
            <person name="Vehar G.A."/>
            <person name="Church W.R."/>
        </authorList>
    </citation>
    <scope>COPPER-BINDING</scope>
</reference>
<reference key="13">
    <citation type="journal article" date="1988" name="Biochemistry">
        <title>Inactivation of human plasma kallikrein and factor XIa by protein C inhibitor.</title>
        <authorList>
            <person name="Meijers J.C."/>
            <person name="Kanters D.H."/>
            <person name="Vlooswijk R.A."/>
            <person name="van Erp H.E."/>
            <person name="Hessing M."/>
            <person name="Bouma B.N."/>
        </authorList>
    </citation>
    <scope>ACTIVITY REGULATION</scope>
    <scope>HETERODIMER WITH SERPINA5</scope>
</reference>
<reference key="14">
    <citation type="journal article" date="1994" name="Biochemistry">
        <title>Posttranslational sulfation of factor V is required for efficient thrombin cleavage and activation and for full procoagulant activity.</title>
        <authorList>
            <person name="Pittman D.D."/>
            <person name="Tomkinson K.N."/>
            <person name="Michnick D."/>
            <person name="Selighsohn U."/>
            <person name="Kaufman R.J."/>
        </authorList>
    </citation>
    <scope>SULFATION</scope>
</reference>
<reference key="15">
    <citation type="journal article" date="1990" name="Blood">
        <title>Sulfation of tyrosine residues in coagulation factor V.</title>
        <authorList>
            <person name="Hortin G.L."/>
        </authorList>
    </citation>
    <scope>SULFATION</scope>
</reference>
<reference key="16">
    <citation type="journal article" date="1994" name="J. Biol. Chem.">
        <title>The mechanism of inactivation of human factor V and human factor Va by activated protein C.</title>
        <authorList>
            <person name="Kalafatis M."/>
            <person name="Rand M.D."/>
            <person name="Mann K.G."/>
        </authorList>
    </citation>
    <scope>PROTEOLYTIC CLEAVAGE AT ARG-334; ARG-534; ARG-707 AND LYS-1022 BY ACTIVATED PROTEIN C</scope>
</reference>
<reference key="17">
    <citation type="journal article" date="1996" name="Eur. J. Biochem.">
        <title>Characterization of semenogelin II and its molecular interaction with prostate-specific antigen and protein C inhibitor.</title>
        <authorList>
            <person name="Kise H."/>
            <person name="Nishioka J."/>
            <person name="Kawamura J."/>
            <person name="Suzuki K."/>
        </authorList>
    </citation>
    <scope>HETERODIMER WITH SERPINA5</scope>
</reference>
<reference key="18">
    <citation type="journal article" date="1998" name="J. Biol. Chem.">
        <title>Protein C inhibitor secreted from activated platelets efficiently inhibits activated protein C on phosphatidylethanolamine of platelet membrane and microvesicles.</title>
        <authorList>
            <person name="Nishioka J."/>
            <person name="Ning M."/>
            <person name="Hayashi T."/>
            <person name="Suzuki K."/>
        </authorList>
    </citation>
    <scope>ACTIVITY REGULATION</scope>
    <scope>HETERODIMER WITH SERPINA5</scope>
</reference>
<reference key="19">
    <citation type="journal article" date="2000" name="N. Engl. J. Med.">
        <title>Mutations in coagulation factors in women with unexplained late fetal loss.</title>
        <authorList>
            <person name="Martinelli I."/>
            <person name="Taioli E."/>
            <person name="Cetin I."/>
            <person name="Marinoni A."/>
            <person name="Gerosa S."/>
            <person name="Villa M.V."/>
            <person name="Bozzo M."/>
            <person name="Mannucci P.M."/>
        </authorList>
    </citation>
    <scope>INVOLVEMENT IN RPRGL1 SUSCEPTIBILITY</scope>
</reference>
<reference key="20">
    <citation type="journal article" date="2004" name="J. Thromb. Haemost.">
        <title>Characterization of a novel human protein C inhibitor (PCI) gene transgenic mouse useful for studying the role of PCI in physiological and pathological conditions.</title>
        <authorList>
            <person name="Hayashi T."/>
            <person name="Nishioka J."/>
            <person name="Kamada H."/>
            <person name="Asanuma K."/>
            <person name="Kondo H."/>
            <person name="Gabazza E.C."/>
            <person name="Ido M."/>
            <person name="Suzuki K."/>
        </authorList>
    </citation>
    <scope>ACTIVITY REGULATION</scope>
    <scope>HETERODIMER WITH SERPINA5</scope>
</reference>
<reference key="21">
    <citation type="journal article" date="2005" name="J. Proteome Res.">
        <title>Human plasma N-glycoproteome analysis by immunoaffinity subtraction, hydrazide chemistry, and mass spectrometry.</title>
        <authorList>
            <person name="Liu T."/>
            <person name="Qian W.-J."/>
            <person name="Gritsenko M.A."/>
            <person name="Camp D.G. II"/>
            <person name="Monroe M.E."/>
            <person name="Moore R.J."/>
            <person name="Smith R.D."/>
        </authorList>
    </citation>
    <scope>GLYCOSYLATION [LARGE SCALE ANALYSIS] AT ASN-297; ASN-460; ASN-821; ASN-977 AND ASN-1559</scope>
    <source>
        <tissue>Plasma</tissue>
    </source>
</reference>
<reference key="22">
    <citation type="journal article" date="2006" name="Mol. Cell. Proteomics">
        <title>Elucidation of N-glycosylation sites on human platelet proteins: a glycoproteomic approach.</title>
        <authorList>
            <person name="Lewandrowski U."/>
            <person name="Moebius J."/>
            <person name="Walter U."/>
            <person name="Sickmann A."/>
        </authorList>
    </citation>
    <scope>GLYCOSYLATION [LARGE SCALE ANALYSIS] AT ASN-297</scope>
    <source>
        <tissue>Platelet</tissue>
    </source>
</reference>
<reference key="23">
    <citation type="journal article" date="2008" name="J. Proteome Res.">
        <title>Phosphoproteome of resting human platelets.</title>
        <authorList>
            <person name="Zahedi R.P."/>
            <person name="Lewandrowski U."/>
            <person name="Wiesner J."/>
            <person name="Wortelkamp S."/>
            <person name="Moebius J."/>
            <person name="Schuetz C."/>
            <person name="Walter U."/>
            <person name="Gambaryan S."/>
            <person name="Sickmann A."/>
        </authorList>
    </citation>
    <scope>IDENTIFICATION BY MASS SPECTROMETRY [LARGE SCALE ANALYSIS]</scope>
    <source>
        <tissue>Platelet</tissue>
    </source>
</reference>
<reference key="24">
    <citation type="journal article" date="2009" name="Sci. Signal.">
        <title>Quantitative phosphoproteomic analysis of T cell receptor signaling reveals system-wide modulation of protein-protein interactions.</title>
        <authorList>
            <person name="Mayya V."/>
            <person name="Lundgren D.H."/>
            <person name="Hwang S.-I."/>
            <person name="Rezaul K."/>
            <person name="Wu L."/>
            <person name="Eng J.K."/>
            <person name="Rodionov V."/>
            <person name="Han D.K."/>
        </authorList>
    </citation>
    <scope>PHOSPHORYLATION [LARGE SCALE ANALYSIS] AT THR-640</scope>
    <scope>IDENTIFICATION BY MASS SPECTROMETRY [LARGE SCALE ANALYSIS]</scope>
    <source>
        <tissue>Leukemic T-cell</tissue>
    </source>
</reference>
<reference key="25">
    <citation type="journal article" date="2015" name="Cell">
        <title>A single kinase generates the majority of the secreted phosphoproteome.</title>
        <authorList>
            <person name="Tagliabracci V.S."/>
            <person name="Wiley S.E."/>
            <person name="Guo X."/>
            <person name="Kinch L.N."/>
            <person name="Durrant E."/>
            <person name="Wen J."/>
            <person name="Xiao J."/>
            <person name="Cui J."/>
            <person name="Nguyen K.B."/>
            <person name="Engel J.L."/>
            <person name="Coon J.J."/>
            <person name="Grishin N."/>
            <person name="Pinna L.A."/>
            <person name="Pagliarini D.J."/>
            <person name="Dixon J.E."/>
        </authorList>
    </citation>
    <scope>PHOSPHORYLATION AT SER-859</scope>
</reference>
<reference key="26">
    <citation type="journal article" date="2024" name="Mol. Cell. Proteomics">
        <title>Analysis of the Healthy Platelet Proteome Identifies a New Form of Domain-Specific O-Fucosylation.</title>
        <authorList>
            <person name="Houlahan C.B."/>
            <person name="Kong Y."/>
            <person name="Johnston B."/>
            <person name="Cielesh M."/>
            <person name="Chau T.H."/>
            <person name="Fenwick J."/>
            <person name="Coleman P.R."/>
            <person name="Hao H."/>
            <person name="Haltiwanger R.S."/>
            <person name="Thaysen-Andersen M."/>
            <person name="Passam F.H."/>
            <person name="Larance M."/>
        </authorList>
    </citation>
    <scope>GLYCOSYLATION AT THR-805</scope>
</reference>
<reference key="27">
    <citation type="journal article" date="1999" name="Nature">
        <title>Crystal structures of the membrane-binding C2 domain of human coagulation factor V.</title>
        <authorList>
            <person name="Macedo-Ribeiro S."/>
            <person name="Bode W."/>
            <person name="Huber R."/>
            <person name="Quinn-Allen M.A."/>
            <person name="Kim S.W."/>
            <person name="Ortel T.L."/>
            <person name="Bourenkov G.P."/>
            <person name="Bartunik H.D."/>
            <person name="Stubbs M.T."/>
            <person name="Kane W.H."/>
            <person name="Fuentes-Prior P."/>
        </authorList>
    </citation>
    <scope>X-RAY CRYSTALLOGRAPHY (1.9 ANGSTROMS) OF 2065-2224</scope>
</reference>
<reference key="28">
    <citation type="journal article" date="1994" name="Hum. Mol. Genet.">
        <title>A polymorphism in the human coagulation factor V gene.</title>
        <authorList>
            <person name="Bayston T.A."/>
            <person name="Ireland H."/>
            <person name="Olds R.J."/>
            <person name="Thein S.L."/>
            <person name="Lane D.A."/>
        </authorList>
    </citation>
    <scope>VARIANT VAL-1764</scope>
</reference>
<reference key="29">
    <citation type="journal article" date="1994" name="Nature">
        <title>Mutation in blood coagulation factor V associated with resistance to activated protein C.</title>
        <authorList>
            <person name="Bertina R.M."/>
            <person name="Koeleman B.P.C."/>
            <person name="Koster T."/>
            <person name="Rosendaal F.R."/>
            <person name="Dirven R.J."/>
            <person name="de Ronde H."/>
            <person name="van der Velden P.A."/>
            <person name="Reitsma P.H."/>
        </authorList>
    </citation>
    <scope>VARIANT THPH2 GLN-534</scope>
</reference>
<reference key="30">
    <citation type="journal article" date="1996" name="Thromb. Haemost.">
        <title>Detection of new polymorphic markers in the factor V gene: association with factor V levels in plasma.</title>
        <authorList>
            <person name="Lunghi B."/>
            <person name="Iacoviello L."/>
            <person name="Gemmati D."/>
            <person name="Dilasio M.G."/>
            <person name="Castoldi E."/>
            <person name="Pinotti M."/>
            <person name="Castaman G."/>
            <person name="Redaelli R."/>
            <person name="Mariani G."/>
            <person name="Marchetti G."/>
            <person name="Bernardi F."/>
        </authorList>
    </citation>
    <scope>VARIANTS ILE-1285 AND ARG-1327</scope>
</reference>
<reference key="31">
    <citation type="journal article" date="1997" name="Gut">
        <title>Prevalence of the factor V Leiden mutation in hepatic and portal vein thrombosis.</title>
        <authorList>
            <person name="Mahmoud A.E.A."/>
            <person name="Elias E."/>
            <person name="Beauchamp N."/>
            <person name="Wilde J.T."/>
        </authorList>
    </citation>
    <scope>ASSOCIATION OF VARIANT LEIDEN GLN-534 WITH SUSCEPTIBILITY TO BUDD-CHIARI SYNDROME</scope>
</reference>
<reference key="32">
    <citation type="journal article" date="1998" name="Blood">
        <title>A novel mutation of Arg306 of factor V gene in Hong Kong Chinese.</title>
        <authorList>
            <person name="Chan W.P."/>
            <person name="Lee C.K."/>
            <person name="Kwong Y.L."/>
            <person name="Lam C.K."/>
            <person name="Liang R."/>
        </authorList>
    </citation>
    <scope>VARIANT HONG KONG GLY-334</scope>
    <scope>VARIANT LYS-513</scope>
</reference>
<reference key="33">
    <citation type="journal article" date="1998" name="Blood">
        <title>Factor V Cambridge: a new mutation (Arg306-to-Thr) associated with resistance to activated protein C.</title>
        <authorList>
            <person name="Williamson D."/>
            <person name="Brown K."/>
            <person name="Luddington R."/>
            <person name="Baglin C."/>
            <person name="Baglin T."/>
        </authorList>
    </citation>
    <scope>VARIANT THPH2 THR-334</scope>
</reference>
<reference key="34">
    <citation type="journal article" date="1998" name="Blood">
        <title>Clinical significance of Arg306 mutations of factor V gene.</title>
        <authorList>
            <person name="Liang R."/>
            <person name="Lee C.K."/>
            <person name="Wat M.S."/>
            <person name="Kwong Y.L."/>
            <person name="Lam C.K."/>
            <person name="Liu H.W."/>
        </authorList>
    </citation>
    <scope>VARIANT HONG KONG GLY-334</scope>
</reference>
<reference key="35">
    <citation type="journal article" date="1999" name="Nat. Genet.">
        <title>Characterization of single-nucleotide polymorphisms in coding regions of human genes.</title>
        <authorList>
            <person name="Cargill M."/>
            <person name="Altshuler D."/>
            <person name="Ireland J."/>
            <person name="Sklar P."/>
            <person name="Ardlie K."/>
            <person name="Patil N."/>
            <person name="Shaw N."/>
            <person name="Lane C.R."/>
            <person name="Lim E.P."/>
            <person name="Kalyanaraman N."/>
            <person name="Nemesh J."/>
            <person name="Ziaugra L."/>
            <person name="Friedland L."/>
            <person name="Rolfe A."/>
            <person name="Warrington J."/>
            <person name="Lipshutz R."/>
            <person name="Daley G.Q."/>
            <person name="Lander E.S."/>
        </authorList>
    </citation>
    <scope>VARIANT THPH2 GLN-534</scope>
    <scope>VARIANTS HIS-107; THR-413; LYS-513; SER-809; THR-817; ARG-858; ARG-865; GLU-925; GLN-1146; ALA-1530; SER-1685; VAL-1749; VAL-1764; ILE-1820 AND GLY-2222</scope>
</reference>
<reference key="36">
    <citation type="journal article" date="1999" name="Nat. Genet.">
        <authorList>
            <person name="Cargill M."/>
            <person name="Altshuler D."/>
            <person name="Ireland J."/>
            <person name="Sklar P."/>
            <person name="Ardlie K."/>
            <person name="Patil N."/>
            <person name="Shaw N."/>
            <person name="Lane C.R."/>
            <person name="Lim E.P."/>
            <person name="Kalyanaraman N."/>
            <person name="Nemesh J."/>
            <person name="Ziaugra L."/>
            <person name="Friedland L."/>
            <person name="Rolfe A."/>
            <person name="Warrington J."/>
            <person name="Lipshutz R."/>
            <person name="Daley G.Q."/>
            <person name="Lander E.S."/>
        </authorList>
    </citation>
    <scope>ERRATUM OF PUBMED:10391209</scope>
</reference>
<reference key="37">
    <citation type="journal article" date="2000" name="Blood">
        <title>Combinations of 4 mutations (FV R506Q, FV H1299R, FV Y1702C, PT 20210G/A) affecting the prothrombinase complex in a thrombophilic family.</title>
        <authorList>
            <person name="Castoldi E."/>
            <person name="Simioni P."/>
            <person name="Kalafatis M."/>
            <person name="Lunghi B."/>
            <person name="Tormene D."/>
            <person name="Girelli D."/>
            <person name="Girolami A."/>
            <person name="Bernardi F."/>
        </authorList>
    </citation>
    <scope>VARIANT FA5D CYS-1730</scope>
    <scope>VARIANT THPH2 GLN-534</scope>
    <scope>VARIANT ARG-1327</scope>
</reference>
<reference key="38">
    <citation type="journal article" date="2001" name="Blood">
        <title>Five novel mutations in the gene for human blood coagulation factor V associated with type I factor V deficiency.</title>
        <authorList>
            <person name="van Wijk R."/>
            <person name="Nieuwenhuis K."/>
            <person name="van den Berg M."/>
            <person name="Huizinga E.G."/>
            <person name="van der Meijden B.B."/>
            <person name="Kraaijenhagen R.J."/>
            <person name="van Solinge W.W."/>
        </authorList>
    </citation>
    <scope>VARIANTS THPH2 ARG-613 AND CYS-1730</scope>
</reference>
<reference key="39">
    <citation type="journal article" date="2002" name="Thromb. Haemost.">
        <title>Novel factor V C2-domain mutation (R2074H) in two families with factor V deficiency and bleeding.</title>
        <authorList>
            <person name="Schrijver I."/>
            <person name="Houissa-Kastally R."/>
            <person name="Jones C.D."/>
            <person name="Garcia K.C."/>
            <person name="Zehnder J.L."/>
        </authorList>
    </citation>
    <scope>VARIANT THPH2 HIS-2102</scope>
</reference>
<reference key="40">
    <citation type="journal article" date="2003" name="Blood">
        <title>Arg2074Cys missense mutation in the C2 domain of factor V causing moderately severe factor V deficiency: molecular characterization by expression of the recombinant protein.</title>
        <authorList>
            <person name="Duga S."/>
            <person name="Montefusco M.C."/>
            <person name="Asselta R."/>
            <person name="Malcovati M."/>
            <person name="Peyvandi F."/>
            <person name="Santagostino E."/>
            <person name="Mannucci P.M."/>
            <person name="Tenchini M.L."/>
        </authorList>
    </citation>
    <scope>VARIANT FA5D CYS-2102</scope>
    <scope>CHARACTERIZATION OF VARIANT FA5D CYS-2102</scope>
</reference>
<reference key="41">
    <citation type="journal article" date="2003" name="Br. J. Haematol.">
        <title>Factor V I359T: a novel mutation associated with thrombosis and resistance to activated protein C.</title>
        <authorList>
            <person name="Mumford A.D."/>
            <person name="McVey J.H."/>
            <person name="Morse C.V."/>
            <person name="Gomez K."/>
            <person name="Steen M."/>
            <person name="Norstrom E.A."/>
            <person name="Tuddenham E.G.D."/>
            <person name="Dahlback B."/>
            <person name="Bolton-Maggs P.H.B."/>
        </authorList>
    </citation>
    <scope>VARIANT THPH2 THR-387</scope>
</reference>
<reference key="42">
    <citation type="journal article" date="2004" name="Arch. Neurol.">
        <title>Meta-analysis of genetic studies in ischemic stroke: thirty-two genes involving approximately 18,000 cases and 58,000 controls.</title>
        <authorList>
            <person name="Casas J.P."/>
            <person name="Hingorani A.D."/>
            <person name="Bautista L.E."/>
            <person name="Sharma P."/>
        </authorList>
    </citation>
    <scope>ASSOCIATION OF VARIANT GLN-534 WITH SUSCEPTIBILITY TO ISCHSTR</scope>
</reference>
<reference key="43">
    <citation type="journal article" date="2004" name="Blood">
        <title>Functional characterization of factor V-Ile359Thr: a novel mutation associated with thrombosis.</title>
        <authorList>
            <person name="Steen M."/>
            <person name="Norstroem E.A."/>
            <person name="Tholander A.-L."/>
            <person name="Bolton-Maggs P.H.B."/>
            <person name="Mumford A."/>
            <person name="McVey J.H."/>
            <person name="Tuddenham E.G.D."/>
            <person name="Dahlbaeck B."/>
        </authorList>
    </citation>
    <scope>CHARACTERIZATION OF VARIANT THPH2 THR-387</scope>
</reference>
<reference key="44">
    <citation type="journal article" date="2006" name="Science">
        <title>The consensus coding sequences of human breast and colorectal cancers.</title>
        <authorList>
            <person name="Sjoeblom T."/>
            <person name="Jones S."/>
            <person name="Wood L.D."/>
            <person name="Parsons D.W."/>
            <person name="Lin J."/>
            <person name="Barber T.D."/>
            <person name="Mandelker D."/>
            <person name="Leary R.J."/>
            <person name="Ptak J."/>
            <person name="Silliman N."/>
            <person name="Szabo S."/>
            <person name="Buckhaults P."/>
            <person name="Farrell C."/>
            <person name="Meeh P."/>
            <person name="Markowitz S.D."/>
            <person name="Willis J."/>
            <person name="Dawson D."/>
            <person name="Willson J.K.V."/>
            <person name="Gazdar A.F."/>
            <person name="Hartigan J."/>
            <person name="Wu L."/>
            <person name="Liu C."/>
            <person name="Parmigiani G."/>
            <person name="Park B.H."/>
            <person name="Bachman K.E."/>
            <person name="Papadopoulos N."/>
            <person name="Vogelstein B."/>
            <person name="Kinzler K.W."/>
            <person name="Velculescu V.E."/>
        </authorList>
    </citation>
    <scope>VARIANT [LARGE SCALE ANALYSIS] ALA-775</scope>
</reference>
<feature type="signal peptide">
    <location>
        <begin position="1"/>
        <end position="28"/>
    </location>
</feature>
<feature type="chain" id="PRO_0000002978" description="Coagulation factor V">
    <location>
        <begin position="29"/>
        <end position="2224"/>
    </location>
</feature>
<feature type="chain" id="PRO_0000002979" description="Coagulation factor V heavy chain">
    <location>
        <begin position="29"/>
        <end position="737"/>
    </location>
</feature>
<feature type="propeptide" id="PRO_0000002980" description="Activation peptide (connecting region)">
    <location>
        <begin position="738"/>
        <end position="1573"/>
    </location>
</feature>
<feature type="chain" id="PRO_0000002981" description="Coagulation factor V light chain">
    <location>
        <begin position="1574"/>
        <end position="2224"/>
    </location>
</feature>
<feature type="domain" description="F5/8 type A 1">
    <location>
        <begin position="30"/>
        <end position="329"/>
    </location>
</feature>
<feature type="domain" description="Plastocyanin-like 1">
    <location>
        <begin position="30"/>
        <end position="193"/>
    </location>
</feature>
<feature type="domain" description="Plastocyanin-like 2">
    <location>
        <begin position="203"/>
        <end position="329"/>
    </location>
</feature>
<feature type="domain" description="F5/8 type A 2">
    <location>
        <begin position="348"/>
        <end position="684"/>
    </location>
</feature>
<feature type="domain" description="Plastocyanin-like 3">
    <location>
        <begin position="348"/>
        <end position="526"/>
    </location>
</feature>
<feature type="domain" description="Plastocyanin-like 4">
    <location>
        <begin position="536"/>
        <end position="684"/>
    </location>
</feature>
<feature type="repeat" description="1-1">
    <location>
        <begin position="895"/>
        <end position="911"/>
    </location>
</feature>
<feature type="repeat" description="1-2">
    <location>
        <begin position="912"/>
        <end position="928"/>
    </location>
</feature>
<feature type="repeat" description="2-1">
    <location>
        <begin position="1185"/>
        <end position="1193"/>
    </location>
</feature>
<feature type="repeat" description="2-2">
    <location>
        <begin position="1194"/>
        <end position="1202"/>
    </location>
</feature>
<feature type="repeat" description="2-3">
    <location>
        <begin position="1203"/>
        <end position="1211"/>
    </location>
</feature>
<feature type="repeat" description="2-4">
    <location>
        <begin position="1212"/>
        <end position="1220"/>
    </location>
</feature>
<feature type="repeat" description="2-5">
    <location>
        <begin position="1221"/>
        <end position="1229"/>
    </location>
</feature>
<feature type="repeat" description="2-6">
    <location>
        <begin position="1230"/>
        <end position="1238"/>
    </location>
</feature>
<feature type="repeat" description="2-7">
    <location>
        <begin position="1239"/>
        <end position="1247"/>
    </location>
</feature>
<feature type="repeat" description="2-8">
    <location>
        <begin position="1248"/>
        <end position="1256"/>
    </location>
</feature>
<feature type="repeat" description="2-9">
    <location>
        <begin position="1257"/>
        <end position="1265"/>
    </location>
</feature>
<feature type="repeat" description="2-10">
    <location>
        <begin position="1266"/>
        <end position="1274"/>
    </location>
</feature>
<feature type="repeat" description="2-11">
    <location>
        <begin position="1275"/>
        <end position="1283"/>
    </location>
</feature>
<feature type="repeat" description="2-12">
    <location>
        <begin position="1284"/>
        <end position="1292"/>
    </location>
</feature>
<feature type="repeat" description="2-13">
    <location>
        <begin position="1293"/>
        <end position="1301"/>
    </location>
</feature>
<feature type="repeat" description="2-14">
    <location>
        <begin position="1302"/>
        <end position="1310"/>
    </location>
</feature>
<feature type="repeat" description="2-15">
    <location>
        <begin position="1311"/>
        <end position="1319"/>
    </location>
</feature>
<feature type="repeat" description="2-16">
    <location>
        <begin position="1320"/>
        <end position="1328"/>
    </location>
</feature>
<feature type="repeat" description="2-17">
    <location>
        <begin position="1329"/>
        <end position="1337"/>
    </location>
</feature>
<feature type="repeat" description="2-18">
    <location>
        <begin position="1338"/>
        <end position="1346"/>
    </location>
</feature>
<feature type="repeat" description="2-19">
    <location>
        <begin position="1347"/>
        <end position="1355"/>
    </location>
</feature>
<feature type="repeat" description="2-20">
    <location>
        <begin position="1356"/>
        <end position="1364"/>
    </location>
</feature>
<feature type="repeat" description="2-21">
    <location>
        <begin position="1365"/>
        <end position="1373"/>
    </location>
</feature>
<feature type="repeat" description="2-22">
    <location>
        <begin position="1374"/>
        <end position="1382"/>
    </location>
</feature>
<feature type="repeat" description="2-23">
    <location>
        <begin position="1383"/>
        <end position="1391"/>
    </location>
</feature>
<feature type="repeat" description="2-24">
    <location>
        <begin position="1392"/>
        <end position="1400"/>
    </location>
</feature>
<feature type="repeat" description="2-25">
    <location>
        <begin position="1401"/>
        <end position="1409"/>
    </location>
</feature>
<feature type="repeat" description="2-26">
    <location>
        <begin position="1410"/>
        <end position="1418"/>
    </location>
</feature>
<feature type="repeat" description="2-27">
    <location>
        <begin position="1419"/>
        <end position="1427"/>
    </location>
</feature>
<feature type="repeat" description="2-28">
    <location>
        <begin position="1428"/>
        <end position="1436"/>
    </location>
</feature>
<feature type="repeat" description="2-29">
    <location>
        <begin position="1437"/>
        <end position="1445"/>
    </location>
</feature>
<feature type="repeat" description="2-30">
    <location>
        <begin position="1446"/>
        <end position="1454"/>
    </location>
</feature>
<feature type="repeat" description="2-31">
    <location>
        <begin position="1455"/>
        <end position="1463"/>
    </location>
</feature>
<feature type="repeat" description="2-32">
    <location>
        <begin position="1464"/>
        <end position="1472"/>
    </location>
</feature>
<feature type="repeat" description="2-33">
    <location>
        <begin position="1473"/>
        <end position="1481"/>
    </location>
</feature>
<feature type="repeat" description="2-34">
    <location>
        <begin position="1482"/>
        <end position="1490"/>
    </location>
</feature>
<feature type="repeat" description="2-35">
    <location>
        <begin position="1493"/>
        <end position="1501"/>
    </location>
</feature>
<feature type="domain" description="F5/8 type A 3">
    <location>
        <begin position="1578"/>
        <end position="1907"/>
    </location>
</feature>
<feature type="domain" description="Plastocyanin-like 5">
    <location>
        <begin position="1578"/>
        <end position="1751"/>
    </location>
</feature>
<feature type="domain" description="Plastocyanin-like 6">
    <location>
        <begin position="1761"/>
        <end position="1907"/>
    </location>
</feature>
<feature type="domain" description="F5/8 type C 1" evidence="3">
    <location>
        <begin position="1907"/>
        <end position="2061"/>
    </location>
</feature>
<feature type="domain" description="F5/8 type C 2" evidence="3">
    <location>
        <begin position="2066"/>
        <end position="2221"/>
    </location>
</feature>
<feature type="region of interest" description="B">
    <location>
        <begin position="692"/>
        <end position="1573"/>
    </location>
</feature>
<feature type="region of interest" description="Disordered" evidence="4">
    <location>
        <begin position="822"/>
        <end position="842"/>
    </location>
</feature>
<feature type="region of interest" description="Disordered" evidence="4">
    <location>
        <begin position="894"/>
        <end position="927"/>
    </location>
</feature>
<feature type="region of interest" description="2 X 17 AA tandem repeats">
    <location>
        <begin position="895"/>
        <end position="928"/>
    </location>
</feature>
<feature type="region of interest" description="Disordered" evidence="4">
    <location>
        <begin position="982"/>
        <end position="1001"/>
    </location>
</feature>
<feature type="region of interest" description="Disordered" evidence="4">
    <location>
        <begin position="1029"/>
        <end position="1048"/>
    </location>
</feature>
<feature type="region of interest" description="Disordered" evidence="4">
    <location>
        <begin position="1097"/>
        <end position="1157"/>
    </location>
</feature>
<feature type="region of interest" description="35 X 9 AA approximate tandem repeats of [TNP]-L-S-P-D-L-S-Q-T">
    <location>
        <begin position="1185"/>
        <end position="1501"/>
    </location>
</feature>
<feature type="region of interest" description="Disordered" evidence="4">
    <location>
        <begin position="1341"/>
        <end position="1367"/>
    </location>
</feature>
<feature type="compositionally biased region" description="Polar residues" evidence="4">
    <location>
        <begin position="822"/>
        <end position="831"/>
    </location>
</feature>
<feature type="compositionally biased region" description="Basic residues" evidence="4">
    <location>
        <begin position="1029"/>
        <end position="1040"/>
    </location>
</feature>
<feature type="compositionally biased region" description="Polar residues" evidence="4">
    <location>
        <begin position="1099"/>
        <end position="1111"/>
    </location>
</feature>
<feature type="compositionally biased region" description="Low complexity" evidence="4">
    <location>
        <begin position="1139"/>
        <end position="1154"/>
    </location>
</feature>
<feature type="binding site" evidence="1">
    <location>
        <position position="139"/>
    </location>
    <ligand>
        <name>Ca(2+)</name>
        <dbReference type="ChEBI" id="CHEBI:29108"/>
    </ligand>
</feature>
<feature type="binding site" evidence="1">
    <location>
        <position position="140"/>
    </location>
    <ligand>
        <name>Ca(2+)</name>
        <dbReference type="ChEBI" id="CHEBI:29108"/>
    </ligand>
</feature>
<feature type="binding site" evidence="1">
    <location>
        <position position="1843"/>
    </location>
    <ligand>
        <name>Cu cation</name>
        <dbReference type="ChEBI" id="CHEBI:23378"/>
    </ligand>
</feature>
<feature type="binding site" evidence="1">
    <location>
        <position position="1845"/>
    </location>
    <ligand>
        <name>Cu cation</name>
        <dbReference type="ChEBI" id="CHEBI:23378"/>
    </ligand>
</feature>
<feature type="site" description="Cleavage; by activated protein C" evidence="29">
    <location>
        <begin position="334"/>
        <end position="335"/>
    </location>
</feature>
<feature type="site" description="Cleavage; by activated protein C" evidence="29">
    <location>
        <begin position="534"/>
        <end position="535"/>
    </location>
</feature>
<feature type="site" description="Cleavage; by activated protein C" evidence="29">
    <location>
        <begin position="707"/>
        <end position="708"/>
    </location>
</feature>
<feature type="site" description="Cleavage; by thrombin" evidence="25">
    <location>
        <begin position="737"/>
        <end position="738"/>
    </location>
</feature>
<feature type="site" description="Cleavage; by activated protein C" evidence="29">
    <location>
        <begin position="1022"/>
        <end position="1023"/>
    </location>
</feature>
<feature type="site" description="Cleavage; by thrombin" evidence="25">
    <location>
        <begin position="1046"/>
        <end position="1047"/>
    </location>
</feature>
<feature type="site" description="Cleavage; by thrombin" evidence="25">
    <location>
        <begin position="1573"/>
        <end position="1574"/>
    </location>
</feature>
<feature type="modified residue" description="Phosphothreonine" evidence="40">
    <location>
        <position position="640"/>
    </location>
</feature>
<feature type="modified residue" description="Sulfotyrosine" evidence="2">
    <location>
        <position position="693"/>
    </location>
</feature>
<feature type="modified residue" description="Sulfotyrosine" evidence="2">
    <location>
        <position position="724"/>
    </location>
</feature>
<feature type="modified residue" description="Sulfotyrosine" evidence="2">
    <location>
        <position position="726"/>
    </location>
</feature>
<feature type="modified residue" description="Phosphoserine; by FAM20C" evidence="22">
    <location>
        <position position="859"/>
    </location>
</feature>
<feature type="modified residue" description="Sulfotyrosine" evidence="2">
    <location>
        <position position="1522"/>
    </location>
</feature>
<feature type="modified residue" description="Sulfotyrosine" evidence="2">
    <location>
        <position position="1538"/>
    </location>
</feature>
<feature type="modified residue" description="Sulfotyrosine" evidence="2">
    <location>
        <position position="1543"/>
    </location>
</feature>
<feature type="modified residue" description="Sulfotyrosine" evidence="2">
    <location>
        <position position="1593"/>
    </location>
</feature>
<feature type="glycosylation site" description="N-linked (GlcNAc...) asparagine" evidence="2">
    <location>
        <position position="51"/>
    </location>
</feature>
<feature type="glycosylation site" description="N-linked (GlcNAc...) asparagine" evidence="2">
    <location>
        <position position="55"/>
    </location>
</feature>
<feature type="glycosylation site" description="N-linked (GlcNAc...) asparagine" evidence="2">
    <location>
        <position position="239"/>
    </location>
</feature>
<feature type="glycosylation site" description="N-linked (GlcNAc...) asparagine" evidence="17 18">
    <location>
        <position position="297"/>
    </location>
</feature>
<feature type="glycosylation site" description="N-linked (GlcNAc...) asparagine" evidence="2">
    <location>
        <position position="382"/>
    </location>
</feature>
<feature type="glycosylation site" description="N-linked (GlcNAc...) asparagine" evidence="18">
    <location>
        <position position="460"/>
    </location>
</feature>
<feature type="glycosylation site" description="N-linked (GlcNAc...) asparagine" evidence="2">
    <location>
        <position position="468"/>
    </location>
</feature>
<feature type="glycosylation site" description="N-linked (GlcNAc...) asparagine" evidence="2">
    <location>
        <position position="554"/>
    </location>
</feature>
<feature type="glycosylation site" description="N-linked (GlcNAc...) asparagine" evidence="2">
    <location>
        <position position="741"/>
    </location>
</feature>
<feature type="glycosylation site" description="N-linked (GlcNAc...) asparagine" evidence="2">
    <location>
        <position position="752"/>
    </location>
</feature>
<feature type="glycosylation site" description="N-linked (GlcNAc...) asparagine" evidence="2">
    <location>
        <position position="760"/>
    </location>
</feature>
<feature type="glycosylation site" description="N-linked (GlcNAc...) asparagine" evidence="2">
    <location>
        <position position="776"/>
    </location>
</feature>
<feature type="glycosylation site" description="N-linked (GlcNAc...) asparagine" evidence="2">
    <location>
        <position position="782"/>
    </location>
</feature>
<feature type="glycosylation site" description="O-linked (GalNAc...) threonine" evidence="26">
    <location>
        <position position="805"/>
    </location>
</feature>
<feature type="glycosylation site" description="N-linked (GlcNAc...) asparagine" evidence="18">
    <location>
        <position position="821"/>
    </location>
</feature>
<feature type="glycosylation site" description="N-linked (GlcNAc...) asparagine" evidence="2">
    <location>
        <position position="938"/>
    </location>
</feature>
<feature type="glycosylation site" description="N-linked (GlcNAc...) asparagine" evidence="18">
    <location>
        <position position="977"/>
    </location>
</feature>
<feature type="glycosylation site" description="N-linked (GlcNAc...) asparagine" evidence="2">
    <location>
        <position position="1074"/>
    </location>
</feature>
<feature type="glycosylation site" description="N-linked (GlcNAc...) asparagine" evidence="2">
    <location>
        <position position="1083"/>
    </location>
</feature>
<feature type="glycosylation site" description="N-linked (GlcNAc...) asparagine" evidence="2">
    <location>
        <position position="1103"/>
    </location>
</feature>
<feature type="glycosylation site" description="N-linked (GlcNAc...) asparagine" evidence="2">
    <location>
        <position position="1106"/>
    </location>
</feature>
<feature type="glycosylation site" description="N-linked (GlcNAc...) asparagine" evidence="2">
    <location>
        <position position="1479"/>
    </location>
</feature>
<feature type="glycosylation site" description="N-linked (GlcNAc...) asparagine" evidence="2">
    <location>
        <position position="1499"/>
    </location>
</feature>
<feature type="glycosylation site" description="N-linked (GlcNAc...) asparagine" evidence="18">
    <location>
        <position position="1559"/>
    </location>
</feature>
<feature type="glycosylation site" description="N-linked (GlcNAc...) asparagine" evidence="2">
    <location>
        <position position="1703"/>
    </location>
</feature>
<feature type="glycosylation site" description="N-linked (GlcNAc...) asparagine" evidence="2">
    <location>
        <position position="2010"/>
    </location>
</feature>
<feature type="glycosylation site" description="N-linked (GlcNAc...) asparagine" evidence="2">
    <location>
        <position position="2209"/>
    </location>
</feature>
<feature type="disulfide bond" evidence="3">
    <location>
        <begin position="167"/>
        <end position="193"/>
    </location>
</feature>
<feature type="disulfide bond" evidence="3">
    <location>
        <begin position="248"/>
        <end position="329"/>
    </location>
</feature>
<feature type="disulfide bond" evidence="3">
    <location>
        <begin position="500"/>
        <end position="526"/>
    </location>
</feature>
<feature type="disulfide bond" evidence="3">
    <location>
        <begin position="603"/>
        <end position="684"/>
    </location>
</feature>
<feature type="disulfide bond" evidence="39">
    <location>
        <begin position="1725"/>
        <end position="1751"/>
    </location>
</feature>
<feature type="disulfide bond" evidence="3">
    <location>
        <begin position="1907"/>
        <end position="2061"/>
    </location>
</feature>
<feature type="disulfide bond" evidence="3">
    <location>
        <begin position="2066"/>
        <end position="2221"/>
    </location>
</feature>
<feature type="sequence variant" id="VAR_021297" description="In dbSNP:rs9332485." evidence="38">
    <original>G</original>
    <variation>S</variation>
    <location>
        <position position="15"/>
    </location>
</feature>
<feature type="sequence variant" id="VAR_013886" description="In dbSNP:rs6019." evidence="5 38">
    <original>D</original>
    <variation>H</variation>
    <location>
        <position position="107"/>
    </location>
</feature>
<feature type="sequence variant" id="VAR_013620" description="In Hong Kong; does not predispose to clinical thrombosis; dbSNP:rs118203905." evidence="34 37">
    <original>R</original>
    <variation>G</variation>
    <location>
        <position position="334"/>
    </location>
</feature>
<feature type="sequence variant" id="VAR_013621" description="In THPH2; Cambridge; dbSNP:rs118203906." evidence="35">
    <original>R</original>
    <variation>T</variation>
    <location>
        <position position="334"/>
    </location>
</feature>
<feature type="sequence variant" id="VAR_032698" description="In THPH2; Liverpool; mutant protein is expressed with an additional carbohydrate chain; dbSNP:rs118203911." evidence="12 13">
    <original>I</original>
    <variation>T</variation>
    <location>
        <position position="387"/>
    </location>
</feature>
<feature type="sequence variant" id="VAR_013887" description="In dbSNP:rs6033." evidence="5 38">
    <original>M</original>
    <variation>T</variation>
    <location>
        <position position="413"/>
    </location>
</feature>
<feature type="sequence variant" id="VAR_013622" description="In dbSNP:rs6020." evidence="5 14 34 38">
    <original>R</original>
    <variation>K</variation>
    <location>
        <position position="513"/>
    </location>
</feature>
<feature type="sequence variant" id="VAR_001213" description="In THPH2; factor V Leiden; risk factor for Budd-Chiari syndrome; risk factor for ischemic stroke; dbSNP:rs6025." evidence="5 6 19 30 38">
    <original>R</original>
    <variation>Q</variation>
    <location>
        <position position="534"/>
    </location>
</feature>
<feature type="sequence variant" id="VAR_032699" description="In THPH2; Nijkerk; dbSNP:rs1453479152." evidence="8">
    <original>C</original>
    <variation>R</variation>
    <location>
        <position position="613"/>
    </location>
</feature>
<feature type="sequence variant" id="VAR_035817" description="In a colorectal cancer sample; somatic mutation." evidence="20">
    <original>S</original>
    <variation>A</variation>
    <location>
        <position position="775"/>
    </location>
</feature>
<feature type="sequence variant" id="VAR_047740" description="In dbSNP:rs13306350.">
    <original>S</original>
    <variation>R</variation>
    <location>
        <position position="781"/>
    </location>
</feature>
<feature type="sequence variant" id="VAR_013888" description="In dbSNP:rs6031." evidence="5 38">
    <original>P</original>
    <variation>S</variation>
    <location>
        <position position="809"/>
    </location>
</feature>
<feature type="sequence variant" id="VAR_013889" description="In dbSNP:rs6018." evidence="5 38">
    <original>N</original>
    <variation>T</variation>
    <location>
        <position position="817"/>
    </location>
</feature>
<feature type="sequence variant" id="VAR_001214" description="In dbSNP:rs4524." evidence="5 9 23 25 38">
    <original>K</original>
    <variation>R</variation>
    <location>
        <position position="858"/>
    </location>
</feature>
<feature type="sequence variant" id="VAR_001215" description="In dbSNP:rs4525." evidence="5 9 23 25 38">
    <original>H</original>
    <variation>R</variation>
    <location>
        <position position="865"/>
    </location>
</feature>
<feature type="sequence variant" id="VAR_021298" description="In dbSNP:rs9332695." evidence="38">
    <original>T</original>
    <variation>S</variation>
    <location>
        <position position="915"/>
    </location>
</feature>
<feature type="sequence variant" id="VAR_013890" description="In dbSNP:rs6032." evidence="5 9 23 25 38">
    <original>K</original>
    <variation>E</variation>
    <location>
        <position position="925"/>
    </location>
</feature>
<feature type="sequence variant" id="VAR_021299" description="In dbSNP:rs9332604." evidence="38">
    <original>N</original>
    <variation>S</variation>
    <location>
        <position position="969"/>
    </location>
</feature>
<feature type="sequence variant" id="VAR_021300" description="In dbSNP:rs9332605." evidence="38">
    <original>R</original>
    <variation>L</variation>
    <location>
        <position position="980"/>
    </location>
</feature>
<feature type="sequence variant" id="VAR_013891" description="In dbSNP:rs6005." evidence="5 38">
    <original>H</original>
    <variation>Q</variation>
    <location>
        <position position="1146"/>
    </location>
</feature>
<feature type="sequence variant" id="VAR_013892" description="In dbSNP:rs1046712." evidence="23 32 38">
    <original>L</original>
    <variation>I</variation>
    <location>
        <position position="1285"/>
    </location>
</feature>
<feature type="sequence variant" id="VAR_013893" description="In dbSNP:rs1800595." evidence="6 32">
    <original>H</original>
    <variation>R</variation>
    <location>
        <position position="1327"/>
    </location>
</feature>
<feature type="sequence variant" id="VAR_047741" description="In dbSNP:rs13306334." evidence="9 25">
    <original>L</original>
    <variation>F</variation>
    <location>
        <position position="1397"/>
    </location>
</feature>
<feature type="sequence variant" id="VAR_021301" description="In dbSNP:rs9332608." evidence="38">
    <original>P</original>
    <variation>S</variation>
    <location>
        <position position="1404"/>
    </location>
</feature>
<feature type="sequence variant" id="VAR_013894" description="In dbSNP:rs6007." evidence="5 38">
    <original>E</original>
    <variation>A</variation>
    <location>
        <position position="1530"/>
    </location>
</feature>
<feature type="sequence variant" id="VAR_013895" description="In dbSNP:rs6011." evidence="5">
    <original>T</original>
    <variation>S</variation>
    <location>
        <position position="1685"/>
    </location>
</feature>
<feature type="sequence variant" id="VAR_032700" description="In FA5D; Seoul 2; dbSNP:rs118203907." evidence="6 8">
    <original>Y</original>
    <variation>C</variation>
    <location>
        <position position="1730"/>
    </location>
</feature>
<feature type="sequence variant" id="VAR_013896" description="In dbSNP:rs6034." evidence="5">
    <original>L</original>
    <variation>V</variation>
    <location>
        <position position="1749"/>
    </location>
</feature>
<feature type="sequence variant" id="VAR_013897" description="In dbSNP:rs6030." evidence="5 25 28">
    <original>M</original>
    <variation>V</variation>
    <location>
        <position position="1764"/>
    </location>
</feature>
<feature type="sequence variant" id="VAR_013898" description="In dbSNP:rs6026." evidence="5">
    <original>M</original>
    <variation>I</variation>
    <location>
        <position position="1820"/>
    </location>
</feature>
<feature type="sequence variant" id="VAR_032701" description="In FA5D; impairs both factor V secretion and activity; dbSNP:rs118203910." evidence="11">
    <original>R</original>
    <variation>C</variation>
    <location>
        <position position="2102"/>
    </location>
</feature>
<feature type="sequence variant" id="VAR_017329" description="In THPH2; dbSNP:rs1659211726." evidence="10">
    <original>R</original>
    <variation>H</variation>
    <location>
        <position position="2102"/>
    </location>
</feature>
<feature type="sequence variant" id="VAR_021302" description="In dbSNP:rs9332701." evidence="38">
    <original>M</original>
    <variation>T</variation>
    <location>
        <position position="2148"/>
    </location>
</feature>
<feature type="sequence variant" id="VAR_034603" description="In dbSNP:rs6679078.">
    <original>K</original>
    <variation>R</variation>
    <location>
        <position position="2185"/>
    </location>
</feature>
<feature type="sequence variant" id="VAR_013899" description="In dbSNP:rs6027." evidence="5">
    <original>D</original>
    <variation>G</variation>
    <location>
        <position position="2222"/>
    </location>
</feature>
<feature type="sequence conflict" description="In Ref. 7; ABD23003." evidence="39" ref="7">
    <original>N</original>
    <variation>S</variation>
    <location>
        <position position="741"/>
    </location>
</feature>
<feature type="sequence conflict" description="In Ref. 1; AAA52424 and 8; CAC82573." evidence="39" ref="1 8">
    <original>E</original>
    <variation>K</variation>
    <location>
        <position position="908"/>
    </location>
</feature>
<feature type="sequence conflict" description="In Ref. 5; BAF84302." evidence="39" ref="5">
    <original>K</original>
    <variation>E</variation>
    <location>
        <position position="991"/>
    </location>
</feature>
<feature type="sequence conflict" description="In Ref. 1; AAA52424." evidence="39" ref="1">
    <original>A</original>
    <variation>T</variation>
    <location>
        <position position="2213"/>
    </location>
</feature>
<feature type="strand" evidence="46">
    <location>
        <begin position="32"/>
        <end position="40"/>
    </location>
</feature>
<feature type="strand" evidence="46">
    <location>
        <begin position="49"/>
        <end position="51"/>
    </location>
</feature>
<feature type="helix" evidence="44">
    <location>
        <begin position="52"/>
        <end position="55"/>
    </location>
</feature>
<feature type="strand" evidence="46">
    <location>
        <begin position="64"/>
        <end position="69"/>
    </location>
</feature>
<feature type="helix" evidence="44">
    <location>
        <begin position="71"/>
        <end position="73"/>
    </location>
</feature>
<feature type="strand" evidence="44">
    <location>
        <begin position="74"/>
        <end position="76"/>
    </location>
</feature>
<feature type="strand" evidence="45">
    <location>
        <begin position="90"/>
        <end position="93"/>
    </location>
</feature>
<feature type="strand" evidence="46">
    <location>
        <begin position="97"/>
        <end position="102"/>
    </location>
</feature>
<feature type="strand" evidence="46">
    <location>
        <begin position="106"/>
        <end position="108"/>
    </location>
</feature>
<feature type="strand" evidence="46">
    <location>
        <begin position="115"/>
        <end position="117"/>
    </location>
</feature>
<feature type="strand" evidence="46">
    <location>
        <begin position="121"/>
        <end position="123"/>
    </location>
</feature>
<feature type="helix" evidence="46">
    <location>
        <begin position="134"/>
        <end position="136"/>
    </location>
</feature>
<feature type="turn" evidence="46">
    <location>
        <begin position="138"/>
        <end position="140"/>
    </location>
</feature>
<feature type="strand" evidence="46">
    <location>
        <begin position="150"/>
        <end position="153"/>
    </location>
</feature>
<feature type="strand" evidence="44">
    <location>
        <begin position="156"/>
        <end position="159"/>
    </location>
</feature>
<feature type="strand" evidence="45">
    <location>
        <begin position="162"/>
        <end position="164"/>
    </location>
</feature>
<feature type="strand" evidence="46">
    <location>
        <begin position="166"/>
        <end position="173"/>
    </location>
</feature>
<feature type="helix" evidence="46">
    <location>
        <begin position="178"/>
        <end position="183"/>
    </location>
</feature>
<feature type="strand" evidence="46">
    <location>
        <begin position="188"/>
        <end position="193"/>
    </location>
</feature>
<feature type="turn" evidence="44">
    <location>
        <begin position="195"/>
        <end position="197"/>
    </location>
</feature>
<feature type="strand" evidence="44">
    <location>
        <begin position="200"/>
        <end position="202"/>
    </location>
</feature>
<feature type="strand" evidence="46">
    <location>
        <begin position="204"/>
        <end position="206"/>
    </location>
</feature>
<feature type="strand" evidence="46">
    <location>
        <begin position="208"/>
        <end position="217"/>
    </location>
</feature>
<feature type="helix" evidence="46">
    <location>
        <begin position="220"/>
        <end position="222"/>
    </location>
</feature>
<feature type="strand" evidence="46">
    <location>
        <begin position="223"/>
        <end position="225"/>
    </location>
</feature>
<feature type="strand" evidence="45">
    <location>
        <begin position="230"/>
        <end position="234"/>
    </location>
</feature>
<feature type="strand" evidence="46">
    <location>
        <begin position="237"/>
        <end position="240"/>
    </location>
</feature>
<feature type="strand" evidence="46">
    <location>
        <begin position="242"/>
        <end position="247"/>
    </location>
</feature>
<feature type="strand" evidence="46">
    <location>
        <begin position="252"/>
        <end position="263"/>
    </location>
</feature>
<feature type="strand" evidence="46">
    <location>
        <begin position="266"/>
        <end position="271"/>
    </location>
</feature>
<feature type="strand" evidence="46">
    <location>
        <begin position="276"/>
        <end position="278"/>
    </location>
</feature>
<feature type="strand" evidence="46">
    <location>
        <begin position="281"/>
        <end position="296"/>
    </location>
</feature>
<feature type="strand" evidence="46">
    <location>
        <begin position="302"/>
        <end position="310"/>
    </location>
</feature>
<feature type="helix" evidence="46">
    <location>
        <begin position="313"/>
        <end position="317"/>
    </location>
</feature>
<feature type="strand" evidence="46">
    <location>
        <begin position="322"/>
        <end position="326"/>
    </location>
</feature>
<feature type="helix" evidence="46">
    <location>
        <begin position="330"/>
        <end position="332"/>
    </location>
</feature>
<feature type="turn" evidence="44">
    <location>
        <begin position="341"/>
        <end position="343"/>
    </location>
</feature>
<feature type="strand" evidence="46">
    <location>
        <begin position="351"/>
        <end position="353"/>
    </location>
</feature>
<feature type="strand" evidence="46">
    <location>
        <begin position="356"/>
        <end position="358"/>
    </location>
</feature>
<feature type="strand" evidence="45">
    <location>
        <begin position="367"/>
        <end position="370"/>
    </location>
</feature>
<feature type="helix" evidence="44">
    <location>
        <begin position="373"/>
        <end position="379"/>
    </location>
</feature>
<feature type="strand" evidence="46">
    <location>
        <begin position="383"/>
        <end position="387"/>
    </location>
</feature>
<feature type="strand" evidence="46">
    <location>
        <begin position="394"/>
        <end position="396"/>
    </location>
</feature>
<feature type="strand" evidence="46">
    <location>
        <begin position="401"/>
        <end position="403"/>
    </location>
</feature>
<feature type="strand" evidence="45">
    <location>
        <begin position="405"/>
        <end position="407"/>
    </location>
</feature>
<feature type="strand" evidence="45">
    <location>
        <begin position="423"/>
        <end position="425"/>
    </location>
</feature>
<feature type="strand" evidence="46">
    <location>
        <begin position="430"/>
        <end position="434"/>
    </location>
</feature>
<feature type="strand" evidence="46">
    <location>
        <begin position="439"/>
        <end position="441"/>
    </location>
</feature>
<feature type="turn" evidence="46">
    <location>
        <begin position="448"/>
        <end position="450"/>
    </location>
</feature>
<feature type="turn" evidence="45">
    <location>
        <begin position="456"/>
        <end position="458"/>
    </location>
</feature>
<feature type="turn" evidence="45">
    <location>
        <begin position="461"/>
        <end position="463"/>
    </location>
</feature>
<feature type="turn" evidence="45">
    <location>
        <begin position="467"/>
        <end position="469"/>
    </location>
</feature>
<feature type="strand" evidence="46">
    <location>
        <begin position="482"/>
        <end position="486"/>
    </location>
</feature>
<feature type="helix" evidence="45">
    <location>
        <begin position="489"/>
        <end position="491"/>
    </location>
</feature>
<feature type="strand" evidence="45">
    <location>
        <begin position="495"/>
        <end position="497"/>
    </location>
</feature>
<feature type="strand" evidence="46">
    <location>
        <begin position="499"/>
        <end position="506"/>
    </location>
</feature>
<feature type="helix" evidence="46">
    <location>
        <begin position="511"/>
        <end position="515"/>
    </location>
</feature>
<feature type="turn" evidence="46">
    <location>
        <begin position="516"/>
        <end position="518"/>
    </location>
</feature>
<feature type="strand" evidence="46">
    <location>
        <begin position="522"/>
        <end position="526"/>
    </location>
</feature>
<feature type="strand" evidence="45">
    <location>
        <begin position="528"/>
        <end position="530"/>
    </location>
</feature>
<feature type="turn" evidence="46">
    <location>
        <begin position="532"/>
        <end position="534"/>
    </location>
</feature>
<feature type="strand" evidence="46">
    <location>
        <begin position="540"/>
        <end position="551"/>
    </location>
</feature>
<feature type="helix" evidence="46">
    <location>
        <begin position="553"/>
        <end position="555"/>
    </location>
</feature>
<feature type="helix" evidence="46">
    <location>
        <begin position="559"/>
        <end position="563"/>
    </location>
</feature>
<feature type="turn" evidence="46">
    <location>
        <begin position="564"/>
        <end position="566"/>
    </location>
</feature>
<feature type="strand" evidence="46">
    <location>
        <begin position="567"/>
        <end position="569"/>
    </location>
</feature>
<feature type="helix" evidence="46">
    <location>
        <begin position="580"/>
        <end position="583"/>
    </location>
</feature>
<feature type="strand" evidence="46">
    <location>
        <begin position="586"/>
        <end position="589"/>
    </location>
</feature>
<feature type="helix" evidence="46">
    <location>
        <begin position="594"/>
        <end position="596"/>
    </location>
</feature>
<feature type="strand" evidence="46">
    <location>
        <begin position="603"/>
        <end position="605"/>
    </location>
</feature>
<feature type="strand" evidence="46">
    <location>
        <begin position="607"/>
        <end position="614"/>
    </location>
</feature>
<feature type="strand" evidence="46">
    <location>
        <begin position="622"/>
        <end position="628"/>
    </location>
</feature>
<feature type="strand" evidence="46">
    <location>
        <begin position="639"/>
        <end position="643"/>
    </location>
</feature>
<feature type="strand" evidence="46">
    <location>
        <begin position="648"/>
        <end position="654"/>
    </location>
</feature>
<feature type="strand" evidence="46">
    <location>
        <begin position="659"/>
        <end position="666"/>
    </location>
</feature>
<feature type="strand" evidence="46">
    <location>
        <begin position="670"/>
        <end position="672"/>
    </location>
</feature>
<feature type="strand" evidence="46">
    <location>
        <begin position="676"/>
        <end position="682"/>
    </location>
</feature>
<feature type="strand" evidence="44">
    <location>
        <begin position="685"/>
        <end position="688"/>
    </location>
</feature>
<feature type="strand" evidence="45">
    <location>
        <begin position="691"/>
        <end position="693"/>
    </location>
</feature>
<feature type="strand" evidence="46">
    <location>
        <begin position="694"/>
        <end position="696"/>
    </location>
</feature>
<feature type="strand" evidence="45">
    <location>
        <begin position="698"/>
        <end position="702"/>
    </location>
</feature>
<feature type="strand" evidence="45">
    <location>
        <begin position="707"/>
        <end position="712"/>
    </location>
</feature>
<feature type="strand" evidence="44">
    <location>
        <begin position="714"/>
        <end position="718"/>
    </location>
</feature>
<feature type="strand" evidence="45">
    <location>
        <begin position="721"/>
        <end position="723"/>
    </location>
</feature>
<feature type="strand" evidence="45">
    <location>
        <begin position="732"/>
        <end position="735"/>
    </location>
</feature>
<feature type="strand" evidence="45">
    <location>
        <begin position="767"/>
        <end position="769"/>
    </location>
</feature>
<feature type="strand" evidence="45">
    <location>
        <begin position="772"/>
        <end position="774"/>
    </location>
</feature>
<feature type="helix" evidence="45">
    <location>
        <begin position="1492"/>
        <end position="1494"/>
    </location>
</feature>
<feature type="strand" evidence="45">
    <location>
        <begin position="1515"/>
        <end position="1519"/>
    </location>
</feature>
<feature type="turn" evidence="45">
    <location>
        <begin position="1531"/>
        <end position="1534"/>
    </location>
</feature>
<feature type="strand" evidence="46">
    <location>
        <begin position="1537"/>
        <end position="1540"/>
    </location>
</feature>
<feature type="strand" evidence="45">
    <location>
        <begin position="1543"/>
        <end position="1545"/>
    </location>
</feature>
<feature type="turn" evidence="46">
    <location>
        <begin position="1549"/>
        <end position="1551"/>
    </location>
</feature>
<feature type="strand" evidence="46">
    <location>
        <begin position="1554"/>
        <end position="1556"/>
    </location>
</feature>
<feature type="strand" evidence="46">
    <location>
        <begin position="1558"/>
        <end position="1560"/>
    </location>
</feature>
<feature type="turn" evidence="43">
    <location>
        <begin position="1569"/>
        <end position="1571"/>
    </location>
</feature>
<feature type="strand" evidence="46">
    <location>
        <begin position="1579"/>
        <end position="1590"/>
    </location>
</feature>
<feature type="strand" evidence="46">
    <location>
        <begin position="1597"/>
        <end position="1602"/>
    </location>
</feature>
<feature type="strand" evidence="45">
    <location>
        <begin position="1607"/>
        <end position="1611"/>
    </location>
</feature>
<feature type="strand" evidence="46">
    <location>
        <begin position="1616"/>
        <end position="1627"/>
    </location>
</feature>
<feature type="turn" evidence="46">
    <location>
        <begin position="1637"/>
        <end position="1643"/>
    </location>
</feature>
<feature type="strand" evidence="46">
    <location>
        <begin position="1648"/>
        <end position="1651"/>
    </location>
</feature>
<feature type="strand" evidence="46">
    <location>
        <begin position="1655"/>
        <end position="1662"/>
    </location>
</feature>
<feature type="strand" evidence="46">
    <location>
        <begin position="1664"/>
        <end position="1666"/>
    </location>
</feature>
<feature type="strand" evidence="46">
    <location>
        <begin position="1671"/>
        <end position="1676"/>
    </location>
</feature>
<feature type="strand" evidence="45">
    <location>
        <begin position="1679"/>
        <end position="1681"/>
    </location>
</feature>
<feature type="strand" evidence="44">
    <location>
        <begin position="1689"/>
        <end position="1691"/>
    </location>
</feature>
<feature type="strand" evidence="46">
    <location>
        <begin position="1694"/>
        <end position="1698"/>
    </location>
</feature>
<feature type="strand" evidence="46">
    <location>
        <begin position="1704"/>
        <end position="1711"/>
    </location>
</feature>
<feature type="helix" evidence="46">
    <location>
        <begin position="1714"/>
        <end position="1716"/>
    </location>
</feature>
<feature type="strand" evidence="46">
    <location>
        <begin position="1720"/>
        <end position="1722"/>
    </location>
</feature>
<feature type="strand" evidence="46">
    <location>
        <begin position="1724"/>
        <end position="1731"/>
    </location>
</feature>
<feature type="helix" evidence="46">
    <location>
        <begin position="1736"/>
        <end position="1739"/>
    </location>
</feature>
<feature type="turn" evidence="46">
    <location>
        <begin position="1740"/>
        <end position="1743"/>
    </location>
</feature>
<feature type="strand" evidence="46">
    <location>
        <begin position="1745"/>
        <end position="1751"/>
    </location>
</feature>
<feature type="strand" evidence="46">
    <location>
        <begin position="1758"/>
        <end position="1760"/>
    </location>
</feature>
<feature type="strand" evidence="46">
    <location>
        <begin position="1763"/>
        <end position="1772"/>
    </location>
</feature>
<feature type="turn" evidence="46">
    <location>
        <begin position="1778"/>
        <end position="1780"/>
    </location>
</feature>
<feature type="strand" evidence="45">
    <location>
        <begin position="1783"/>
        <end position="1785"/>
    </location>
</feature>
<feature type="helix" evidence="45">
    <location>
        <begin position="1789"/>
        <end position="1792"/>
    </location>
</feature>
<feature type="turn" evidence="46">
    <location>
        <begin position="1799"/>
        <end position="1801"/>
    </location>
</feature>
<feature type="strand" evidence="46">
    <location>
        <begin position="1806"/>
        <end position="1810"/>
    </location>
</feature>
<feature type="strand" evidence="46">
    <location>
        <begin position="1819"/>
        <end position="1821"/>
    </location>
</feature>
<feature type="strand" evidence="46">
    <location>
        <begin position="1825"/>
        <end position="1831"/>
    </location>
</feature>
<feature type="strand" evidence="46">
    <location>
        <begin position="1840"/>
        <end position="1844"/>
    </location>
</feature>
<feature type="strand" evidence="46">
    <location>
        <begin position="1849"/>
        <end position="1851"/>
    </location>
</feature>
<feature type="strand" evidence="46">
    <location>
        <begin position="1853"/>
        <end position="1855"/>
    </location>
</feature>
<feature type="strand" evidence="46">
    <location>
        <begin position="1857"/>
        <end position="1864"/>
    </location>
</feature>
<feature type="strand" evidence="46">
    <location>
        <begin position="1870"/>
        <end position="1875"/>
    </location>
</feature>
<feature type="strand" evidence="46">
    <location>
        <begin position="1878"/>
        <end position="1887"/>
    </location>
</feature>
<feature type="helix" evidence="46">
    <location>
        <begin position="1889"/>
        <end position="1892"/>
    </location>
</feature>
<feature type="turn" evidence="44">
    <location>
        <begin position="1893"/>
        <end position="1895"/>
    </location>
</feature>
<feature type="strand" evidence="46">
    <location>
        <begin position="1897"/>
        <end position="1903"/>
    </location>
</feature>
<feature type="strand" evidence="46">
    <location>
        <begin position="1912"/>
        <end position="1916"/>
    </location>
</feature>
<feature type="helix" evidence="46">
    <location>
        <begin position="1920"/>
        <end position="1922"/>
    </location>
</feature>
<feature type="strand" evidence="46">
    <location>
        <begin position="1923"/>
        <end position="1926"/>
    </location>
</feature>
<feature type="strand" evidence="45">
    <location>
        <begin position="1930"/>
        <end position="1932"/>
    </location>
</feature>
<feature type="helix" evidence="46">
    <location>
        <begin position="1934"/>
        <end position="1937"/>
    </location>
</feature>
<feature type="strand" evidence="46">
    <location>
        <begin position="1947"/>
        <end position="1949"/>
    </location>
</feature>
<feature type="strand" evidence="46">
    <location>
        <begin position="1955"/>
        <end position="1957"/>
    </location>
</feature>
<feature type="strand" evidence="46">
    <location>
        <begin position="1963"/>
        <end position="1965"/>
    </location>
</feature>
<feature type="strand" evidence="46">
    <location>
        <begin position="1971"/>
        <end position="1979"/>
    </location>
</feature>
<feature type="strand" evidence="45">
    <location>
        <begin position="1981"/>
        <end position="1983"/>
    </location>
</feature>
<feature type="strand" evidence="46">
    <location>
        <begin position="1989"/>
        <end position="2002"/>
    </location>
</feature>
<feature type="strand" evidence="44">
    <location>
        <begin position="2008"/>
        <end position="2010"/>
    </location>
</feature>
<feature type="strand" evidence="46">
    <location>
        <begin position="2012"/>
        <end position="2015"/>
    </location>
</feature>
<feature type="strand" evidence="45">
    <location>
        <begin position="2022"/>
        <end position="2025"/>
    </location>
</feature>
<feature type="strand" evidence="46">
    <location>
        <begin position="2028"/>
        <end position="2051"/>
    </location>
</feature>
<feature type="strand" evidence="46">
    <location>
        <begin position="2053"/>
        <end position="2055"/>
    </location>
</feature>
<feature type="strand" evidence="46">
    <location>
        <begin position="2058"/>
        <end position="2065"/>
    </location>
</feature>
<feature type="turn" evidence="41">
    <location>
        <begin position="2072"/>
        <end position="2074"/>
    </location>
</feature>
<feature type="strand" evidence="42">
    <location>
        <begin position="2075"/>
        <end position="2077"/>
    </location>
</feature>
<feature type="helix" evidence="41">
    <location>
        <begin position="2079"/>
        <end position="2081"/>
    </location>
</feature>
<feature type="strand" evidence="41">
    <location>
        <begin position="2082"/>
        <end position="2085"/>
    </location>
</feature>
<feature type="strand" evidence="42">
    <location>
        <begin position="2093"/>
        <end position="2095"/>
    </location>
</feature>
<feature type="helix" evidence="41">
    <location>
        <begin position="2098"/>
        <end position="2100"/>
    </location>
</feature>
<feature type="strand" evidence="41">
    <location>
        <begin position="2107"/>
        <end position="2109"/>
    </location>
</feature>
<feature type="strand" evidence="41">
    <location>
        <begin position="2111"/>
        <end position="2113"/>
    </location>
</feature>
<feature type="strand" evidence="46">
    <location>
        <begin position="2118"/>
        <end position="2120"/>
    </location>
</feature>
<feature type="strand" evidence="41">
    <location>
        <begin position="2123"/>
        <end position="2139"/>
    </location>
</feature>
<feature type="strand" evidence="41">
    <location>
        <begin position="2141"/>
        <end position="2143"/>
    </location>
</feature>
<feature type="strand" evidence="41">
    <location>
        <begin position="2146"/>
        <end position="2163"/>
    </location>
</feature>
<feature type="strand" evidence="45">
    <location>
        <begin position="2170"/>
        <end position="2173"/>
    </location>
</feature>
<feature type="strand" evidence="41">
    <location>
        <begin position="2182"/>
        <end position="2185"/>
    </location>
</feature>
<feature type="strand" evidence="41">
    <location>
        <begin position="2188"/>
        <end position="2211"/>
    </location>
</feature>
<feature type="strand" evidence="41">
    <location>
        <begin position="2213"/>
        <end position="2222"/>
    </location>
</feature>
<proteinExistence type="evidence at protein level"/>
<accession>P12259</accession>
<accession>A8K6E8</accession>
<accession>Q14285</accession>
<accession>Q2EHR5</accession>
<accession>Q5R346</accession>
<accession>Q5R347</accession>
<accession>Q6UPU6</accession>
<accession>Q8WWQ6</accession>
<organism>
    <name type="scientific">Homo sapiens</name>
    <name type="common">Human</name>
    <dbReference type="NCBI Taxonomy" id="9606"/>
    <lineage>
        <taxon>Eukaryota</taxon>
        <taxon>Metazoa</taxon>
        <taxon>Chordata</taxon>
        <taxon>Craniata</taxon>
        <taxon>Vertebrata</taxon>
        <taxon>Euteleostomi</taxon>
        <taxon>Mammalia</taxon>
        <taxon>Eutheria</taxon>
        <taxon>Euarchontoglires</taxon>
        <taxon>Primates</taxon>
        <taxon>Haplorrhini</taxon>
        <taxon>Catarrhini</taxon>
        <taxon>Hominidae</taxon>
        <taxon>Homo</taxon>
    </lineage>
</organism>
<name>FA5_HUMAN</name>
<keyword id="KW-0002">3D-structure</keyword>
<keyword id="KW-0094">Blood coagulation</keyword>
<keyword id="KW-0106">Calcium</keyword>
<keyword id="KW-0186">Copper</keyword>
<keyword id="KW-0225">Disease variant</keyword>
<keyword id="KW-1015">Disulfide bond</keyword>
<keyword id="KW-0325">Glycoprotein</keyword>
<keyword id="KW-0356">Hemostasis</keyword>
<keyword id="KW-0479">Metal-binding</keyword>
<keyword id="KW-0597">Phosphoprotein</keyword>
<keyword id="KW-1267">Proteomics identification</keyword>
<keyword id="KW-1185">Reference proteome</keyword>
<keyword id="KW-0677">Repeat</keyword>
<keyword id="KW-0964">Secreted</keyword>
<keyword id="KW-0732">Signal</keyword>
<keyword id="KW-0765">Sulfation</keyword>
<keyword id="KW-0792">Thrombophilia</keyword>
<keyword id="KW-0865">Zymogen</keyword>
<protein>
    <recommendedName>
        <fullName>Coagulation factor V</fullName>
    </recommendedName>
    <alternativeName>
        <fullName>Activated protein C cofactor</fullName>
    </alternativeName>
    <alternativeName>
        <fullName>Proaccelerin, labile factor</fullName>
    </alternativeName>
    <component>
        <recommendedName>
            <fullName>Coagulation factor V heavy chain</fullName>
        </recommendedName>
    </component>
    <component>
        <recommendedName>
            <fullName>Coagulation factor V light chain</fullName>
        </recommendedName>
    </component>
</protein>
<evidence type="ECO:0000250" key="1"/>
<evidence type="ECO:0000255" key="2"/>
<evidence type="ECO:0000255" key="3">
    <source>
        <dbReference type="PROSITE-ProRule" id="PRU00081"/>
    </source>
</evidence>
<evidence type="ECO:0000256" key="4">
    <source>
        <dbReference type="SAM" id="MobiDB-lite"/>
    </source>
</evidence>
<evidence type="ECO:0000269" key="5">
    <source>
    </source>
</evidence>
<evidence type="ECO:0000269" key="6">
    <source>
    </source>
</evidence>
<evidence type="ECO:0000269" key="7">
    <source>
    </source>
</evidence>
<evidence type="ECO:0000269" key="8">
    <source>
    </source>
</evidence>
<evidence type="ECO:0000269" key="9">
    <source>
    </source>
</evidence>
<evidence type="ECO:0000269" key="10">
    <source>
    </source>
</evidence>
<evidence type="ECO:0000269" key="11">
    <source>
    </source>
</evidence>
<evidence type="ECO:0000269" key="12">
    <source>
    </source>
</evidence>
<evidence type="ECO:0000269" key="13">
    <source>
    </source>
</evidence>
<evidence type="ECO:0000269" key="14">
    <source>
    </source>
</evidence>
<evidence type="ECO:0000269" key="15">
    <source>
    </source>
</evidence>
<evidence type="ECO:0000269" key="16">
    <source>
    </source>
</evidence>
<evidence type="ECO:0000269" key="17">
    <source>
    </source>
</evidence>
<evidence type="ECO:0000269" key="18">
    <source>
    </source>
</evidence>
<evidence type="ECO:0000269" key="19">
    <source>
    </source>
</evidence>
<evidence type="ECO:0000269" key="20">
    <source>
    </source>
</evidence>
<evidence type="ECO:0000269" key="21">
    <source>
    </source>
</evidence>
<evidence type="ECO:0000269" key="22">
    <source>
    </source>
</evidence>
<evidence type="ECO:0000269" key="23">
    <source>
    </source>
</evidence>
<evidence type="ECO:0000269" key="24">
    <source>
    </source>
</evidence>
<evidence type="ECO:0000269" key="25">
    <source>
    </source>
</evidence>
<evidence type="ECO:0000269" key="26">
    <source>
    </source>
</evidence>
<evidence type="ECO:0000269" key="27">
    <source>
    </source>
</evidence>
<evidence type="ECO:0000269" key="28">
    <source>
    </source>
</evidence>
<evidence type="ECO:0000269" key="29">
    <source>
    </source>
</evidence>
<evidence type="ECO:0000269" key="30">
    <source>
    </source>
</evidence>
<evidence type="ECO:0000269" key="31">
    <source>
    </source>
</evidence>
<evidence type="ECO:0000269" key="32">
    <source>
    </source>
</evidence>
<evidence type="ECO:0000269" key="33">
    <source>
    </source>
</evidence>
<evidence type="ECO:0000269" key="34">
    <source>
    </source>
</evidence>
<evidence type="ECO:0000269" key="35">
    <source>
    </source>
</evidence>
<evidence type="ECO:0000269" key="36">
    <source>
    </source>
</evidence>
<evidence type="ECO:0000269" key="37">
    <source>
    </source>
</evidence>
<evidence type="ECO:0000269" key="38">
    <source ref="3"/>
</evidence>
<evidence type="ECO:0000305" key="39"/>
<evidence type="ECO:0007744" key="40">
    <source>
    </source>
</evidence>
<evidence type="ECO:0007829" key="41">
    <source>
        <dbReference type="PDB" id="1CZT"/>
    </source>
</evidence>
<evidence type="ECO:0007829" key="42">
    <source>
        <dbReference type="PDB" id="1CZV"/>
    </source>
</evidence>
<evidence type="ECO:0007829" key="43">
    <source>
        <dbReference type="PDB" id="3S9C"/>
    </source>
</evidence>
<evidence type="ECO:0007829" key="44">
    <source>
        <dbReference type="PDB" id="7KVE"/>
    </source>
</evidence>
<evidence type="ECO:0007829" key="45">
    <source>
        <dbReference type="PDB" id="8FDG"/>
    </source>
</evidence>
<evidence type="ECO:0007829" key="46">
    <source>
        <dbReference type="PDB" id="8TN9"/>
    </source>
</evidence>
<sequence length="2224" mass="251703">MFPGCPRLWVLVVLGTSWVGWGSQGTEAAQLRQFYVAAQGISWSYRPEPTNSSLNLSVTSFKKIVYREYEPYFKKEKPQSTISGLLGPTLYAEVGDIIKVHFKNKADKPLSIHPQGIRYSKLSEGASYLDHTFPAEKMDDAVAPGREYTYEWSISEDSGPTHDDPPCLTHIYYSHENLIEDFNSGLIGPLLICKKGTLTEGGTQKTFDKQIVLLFAVFDESKSWSQSSSLMYTVNGYVNGTMPDITVCAHDHISWHLLGMSSGPELFSIHFNGQVLEQNHHKVSAITLVSATSTTANMTVGPEGKWIISSLTPKHLQAGMQAYIDIKNCPKKTRNLKKITREQRRHMKRWEYFIAAEEVIWDYAPVIPANMDKKYRSQHLDNFSNQIGKHYKKVMYTQYEDESFTKHTVNPNMKEDGILGPIIRAQVRDTLKIVFKNMASRPYSIYPHGVTFSPYEDEVNSSFTSGRNNTMIRAVQPGETYTYKWNILEFDEPTENDAQCLTRPYYSDVDIMRDIASGLIGLLLICKSRSLDRRGIQRAADIEQQAVFAVFDENKSWYLEDNINKFCENPDEVKRDDPKFYESNIMSTINGYVPESITTLGFCFDDTVQWHFCSVGTQNEILTIHFTGHSFIYGKRHEDTLTLFPMRGESVTVTMDNVGTWMLTSMNSSPRSKKLRLKFRDVKCIPDDDEDSYEIFEPPESTVMATRKMHDRLEPEDEESDADYDYQNRLAAALGIRSFRNSSLNQEEEEFNLTALALENGTEFVSSNTDIIVGSNYSSPSNISKFTVNNLAEPQKAPSHQQATTAGSPLRHLIGKNSVLNSSTAEHSSPYSEDPIEDPLQPDVTGIRLLSLGAGEFKSQEHAKHKGPKVERDQAAKHRFSWMKLLAHKVGRHLSQDTGSPSGMRPWEDLPSQDTGSPSRMRPWKDPPSDLLLLKQSNSSKILVGRWHLASEKGSYEIIQDTDEDTAVNNWLISPQNASRAWGESTPLANKPGKQSGHPKFPRVRHKSLQVRQDGGKSRLKKSQFLIKTRKKKKEKHTHHAPLSPRTFHPLRSEAYNTFSERRLKHSLVLHKSNETSLPTDLNQTLPSMDFGWIASLPDHNQNSSNDTGQASCPPGLYQTVPPEEHYQTFPIQDPDQMHSTSDPSHRSSSPELSEMLEYDRSHKSFPTDISQMSPSSEHEVWQTVISPDLSQVTLSPELSQTNLSPDLSHTTLSPELIQRNLSPALGQMPISPDLSHTTLSPDLSHTTLSLDLSQTNLSPELSQTNLSPALGQMPLSPDLSHTTLSLDFSQTNLSPELSHMTLSPELSQTNLSPALGQMPISPDLSHTTLSLDFSQTNLSPELSQTNLSPALGQMPLSPDPSHTTLSLDLSQTNLSPELSQTNLSPDLSEMPLFADLSQIPLTPDLDQMTLSPDLGETDLSPNFGQMSLSPDLSQVTLSPDISDTTLLPDLSQISPPPDLDQIFYPSESSQSLLLQEFNESFPYPDLGQMPSPSSPTLNDTFLSKEFNPLVIVGLSKDGTDYIEIIPKEEVQSSEDDYAEIDYVPYDDPYKTDVRTNINSSRDPDNIAAWYLRSNNGNRRNYYIAAEEISWDYSEFVQRETDIEDSDDIPEDTTYKKVVFRKYLDSTFTKRDPRGEYEEHLGILGPIIRAEVDDVIQVRFKNLASRPYSLHAHGLSYEKSSEGKTYEDDSPEWFKEDNAVQPNSSYTYVWHATERSGPESPGSACRAWAYYSAVNPEKDIHSGLIGPLLICQKGILHKDSNMPMDMREFVLLFMTFDEKKSWYYEKKSRSSWRLTSSEMKKSHEFHAINGMIYSLPGLKMYEQEWVRLHLLNIGGSQDIHVVHFHGQTLLENGNKQHQLGVWPLLPGSFKTLEMKASKPGWWLLNTEVGENQRAGMQTPFLIMDRDCRMPMGLSTGIISDSQIKASEFLGYWEPRLARLNNGGSYNAWSVEKLAAEFASKPWIQVDMQKEVIITGIQTQGAKHYLKSCYTTEFYVAYSSNQINWQIFKGNSTRNVMYFNGNSDASTIKENQFDPPIVARYIRISPTRAYNRPTLRLELQGCEVNGCSTPLGMENGKIENKQITASSFKKSWWGDYWEPFRARLNAQGRVNAWQAKANNNKQWLEIDLLKIKKITAIITQGCKSLSSEMYVKSYTIHYSEQGVEWKPYRLKSSMVDKIFEGNTNTKGHVKNFFNPPIISRFIRVIPKTWNQSIALRLELFGCDIY</sequence>
<comment type="function">
    <text>Central regulator of hemostasis. It serves as a critical cofactor for the prothrombinase activity of factor Xa that results in the activation of prothrombin to thrombin.</text>
</comment>
<comment type="activity regulation">
    <text evidence="15 24 27 36">Inhibited by SERPINA5.</text>
</comment>
<comment type="subunit">
    <text>Factor Va, the activated form of factor V, is composed of a heavy chain and a light chain, non-covalently bound. The interaction between the two chains is calcium-dependent. Forms heterodimer with SERPINA5.</text>
</comment>
<comment type="interaction">
    <interactant intactId="EBI-9640912">
        <id>P12259</id>
    </interactant>
    <interactant intactId="EBI-7151999">
        <id>P78380</id>
        <label>OLR1</label>
    </interactant>
    <organismsDiffer>false</organismsDiffer>
    <experiments>2</experiments>
</comment>
<comment type="subcellular location">
    <subcellularLocation>
        <location evidence="1">Secreted</location>
    </subcellularLocation>
</comment>
<comment type="tissue specificity">
    <text>Plasma.</text>
</comment>
<comment type="domain">
    <text>Domain B contains 35 x 9 AA tandem repeats, and 2 x 17 AA repeats.</text>
</comment>
<comment type="PTM">
    <text>Thrombin activates factor V proteolytically to the active cofactor, factor Va (formation of a heavy chain at the N-terminus and a light chain at the C-terminus).</text>
</comment>
<comment type="PTM">
    <text evidence="21 29 31">Sulfation is required for efficient thrombin cleavage and activation and for full procoagulant activity.</text>
</comment>
<comment type="PTM">
    <text evidence="29">Activated protein C inactivates factor V and factor Va by proteolytic degradation.</text>
</comment>
<comment type="PTM">
    <text evidence="22">Phosphorylated by FAM20C in the extracellular medium.</text>
</comment>
<comment type="disease" evidence="6 11">
    <disease id="DI-00486">
        <name>Factor V deficiency</name>
        <acronym>FA5D</acronym>
        <description>A blood coagulation disorder leading to a hemorrhagic diathesis known as parahemophilia.</description>
        <dbReference type="MIM" id="227400"/>
    </disease>
    <text>The disease is caused by variants affecting the gene represented in this entry.</text>
</comment>
<comment type="disease" evidence="5 6 8 10 12 13 19 30 35">
    <disease id="DI-01101">
        <name>Thrombophilia due to activated protein C resistance</name>
        <acronym>THPH2</acronym>
        <description>A hemostatic disorder due to defective degradation of factor V by activated protein C. It is characterized by a poor anticoagulant response to activated protein C resulting in tendency to thrombosis.</description>
        <dbReference type="MIM" id="188055"/>
    </disease>
    <text>The disease is caused by variants affecting the gene represented in this entry.</text>
</comment>
<comment type="disease" evidence="33">
    <disease id="DI-01300">
        <name>Budd-Chiari syndrome</name>
        <acronym>BDCHS</acronym>
        <description>A syndrome caused by obstruction of hepatic venous outflow involving either the hepatic veins or the terminal segment of the inferior vena cava. Obstructions are generally caused by thrombosis and lead to hepatic congestion and ischemic necrosis. Clinical manifestations observed in the majority of patients include hepatomegaly, right upper quadrant pain and abdominal ascites. Budd-Chiari syndrome is associated with a combination of disease states including primary myeloproliferative syndromes and thrombophilia due to factor V Leiden, protein C deficiency and antithrombin III deficiency. Budd-Chiari syndrome is a rare but typical complication in patients with polycythemia vera.</description>
        <dbReference type="MIM" id="600880"/>
    </disease>
    <text>Disease susceptibility is associated with variants affecting the gene represented in this entry.</text>
</comment>
<comment type="disease" evidence="16">
    <disease id="DI-01835">
        <name>Ischemic stroke</name>
        <acronym>ISCHSTR</acronym>
        <description>A stroke is an acute neurologic event leading to death of neural tissue of the brain and resulting in loss of motor, sensory and/or cognitive function. Ischemic strokes, resulting from vascular occlusion, is considered to be a highly complex disease consisting of a group of heterogeneous disorders with multiple genetic and environmental risk factors.</description>
        <dbReference type="MIM" id="601367"/>
    </disease>
    <text>Disease susceptibility is associated with variants affecting the gene represented in this entry.</text>
</comment>
<comment type="disease" evidence="7">
    <disease id="DI-03350">
        <name>Pregnancy loss, recurrent, 1</name>
        <acronym>RPRGL1</acronym>
        <description>A common complication of pregnancy, resulting in spontaneous abortion before the fetus has reached viability. The term includes all miscarriages from the time of conception until 24 weeks of gestation. Recurrent pregnancy loss is defined as 3 or more consecutive spontaneous abortions.</description>
        <dbReference type="MIM" id="614389"/>
    </disease>
    <text>Disease susceptibility is associated with variants affecting the gene represented in this entry.</text>
</comment>
<comment type="similarity">
    <text evidence="39">Belongs to the multicopper oxidase family.</text>
</comment>
<comment type="sequence caution" evidence="39">
    <conflict type="erroneous gene model prediction">
        <sequence resource="EMBL-CDS" id="ABD23003"/>
    </conflict>
</comment>
<comment type="online information" name="Wikipedia">
    <link uri="https://en.wikipedia.org/wiki/Factor_V"/>
    <text>Factor V entry</text>
</comment>
<gene>
    <name type="primary">F5</name>
</gene>
<dbReference type="EMBL" id="M16967">
    <property type="protein sequence ID" value="AAA52424.1"/>
    <property type="molecule type" value="mRNA"/>
</dbReference>
<dbReference type="EMBL" id="L32779">
    <property type="protein sequence ID" value="AAB59401.1"/>
    <property type="molecule type" value="Genomic_DNA"/>
</dbReference>
<dbReference type="EMBL" id="L32755">
    <property type="protein sequence ID" value="AAB59401.1"/>
    <property type="status" value="JOINED"/>
    <property type="molecule type" value="Genomic_DNA"/>
</dbReference>
<dbReference type="EMBL" id="L32756">
    <property type="protein sequence ID" value="AAB59401.1"/>
    <property type="status" value="JOINED"/>
    <property type="molecule type" value="Genomic_DNA"/>
</dbReference>
<dbReference type="EMBL" id="L32757">
    <property type="protein sequence ID" value="AAB59401.1"/>
    <property type="status" value="JOINED"/>
    <property type="molecule type" value="Genomic_DNA"/>
</dbReference>
<dbReference type="EMBL" id="L32758">
    <property type="protein sequence ID" value="AAB59401.1"/>
    <property type="status" value="JOINED"/>
    <property type="molecule type" value="Genomic_DNA"/>
</dbReference>
<dbReference type="EMBL" id="L32759">
    <property type="protein sequence ID" value="AAB59401.1"/>
    <property type="status" value="JOINED"/>
    <property type="molecule type" value="Genomic_DNA"/>
</dbReference>
<dbReference type="EMBL" id="L32760">
    <property type="protein sequence ID" value="AAB59401.1"/>
    <property type="status" value="JOINED"/>
    <property type="molecule type" value="Genomic_DNA"/>
</dbReference>
<dbReference type="EMBL" id="L32761">
    <property type="protein sequence ID" value="AAB59401.1"/>
    <property type="status" value="JOINED"/>
    <property type="molecule type" value="Genomic_DNA"/>
</dbReference>
<dbReference type="EMBL" id="L32762">
    <property type="protein sequence ID" value="AAB59401.1"/>
    <property type="status" value="JOINED"/>
    <property type="molecule type" value="Genomic_DNA"/>
</dbReference>
<dbReference type="EMBL" id="L32763">
    <property type="protein sequence ID" value="AAB59401.1"/>
    <property type="status" value="JOINED"/>
    <property type="molecule type" value="Genomic_DNA"/>
</dbReference>
<dbReference type="EMBL" id="L32764">
    <property type="protein sequence ID" value="AAB59401.1"/>
    <property type="status" value="JOINED"/>
    <property type="molecule type" value="Genomic_DNA"/>
</dbReference>
<dbReference type="EMBL" id="L32765">
    <property type="protein sequence ID" value="AAB59401.1"/>
    <property type="status" value="JOINED"/>
    <property type="molecule type" value="Genomic_DNA"/>
</dbReference>
<dbReference type="EMBL" id="L32766">
    <property type="protein sequence ID" value="AAB59401.1"/>
    <property type="status" value="JOINED"/>
    <property type="molecule type" value="Genomic_DNA"/>
</dbReference>
<dbReference type="EMBL" id="L32767">
    <property type="protein sequence ID" value="AAB59401.1"/>
    <property type="status" value="JOINED"/>
    <property type="molecule type" value="Genomic_DNA"/>
</dbReference>
<dbReference type="EMBL" id="L32768">
    <property type="protein sequence ID" value="AAB59401.1"/>
    <property type="status" value="JOINED"/>
    <property type="molecule type" value="Genomic_DNA"/>
</dbReference>
<dbReference type="EMBL" id="L32769">
    <property type="protein sequence ID" value="AAB59401.1"/>
    <property type="status" value="JOINED"/>
    <property type="molecule type" value="Genomic_DNA"/>
</dbReference>
<dbReference type="EMBL" id="L32770">
    <property type="protein sequence ID" value="AAB59401.1"/>
    <property type="status" value="JOINED"/>
    <property type="molecule type" value="Genomic_DNA"/>
</dbReference>
<dbReference type="EMBL" id="L32771">
    <property type="protein sequence ID" value="AAB59401.1"/>
    <property type="status" value="JOINED"/>
    <property type="molecule type" value="Genomic_DNA"/>
</dbReference>
<dbReference type="EMBL" id="L32772">
    <property type="protein sequence ID" value="AAB59401.1"/>
    <property type="status" value="JOINED"/>
    <property type="molecule type" value="Genomic_DNA"/>
</dbReference>
<dbReference type="EMBL" id="L32773">
    <property type="protein sequence ID" value="AAB59401.1"/>
    <property type="status" value="JOINED"/>
    <property type="molecule type" value="Genomic_DNA"/>
</dbReference>
<dbReference type="EMBL" id="L32774">
    <property type="protein sequence ID" value="AAB59401.1"/>
    <property type="status" value="JOINED"/>
    <property type="molecule type" value="Genomic_DNA"/>
</dbReference>
<dbReference type="EMBL" id="L32775">
    <property type="protein sequence ID" value="AAB59401.1"/>
    <property type="status" value="JOINED"/>
    <property type="molecule type" value="Genomic_DNA"/>
</dbReference>
<dbReference type="EMBL" id="L32776">
    <property type="protein sequence ID" value="AAB59401.1"/>
    <property type="status" value="JOINED"/>
    <property type="molecule type" value="Genomic_DNA"/>
</dbReference>
<dbReference type="EMBL" id="L32777">
    <property type="protein sequence ID" value="AAB59401.1"/>
    <property type="status" value="JOINED"/>
    <property type="molecule type" value="Genomic_DNA"/>
</dbReference>
<dbReference type="EMBL" id="L32778">
    <property type="protein sequence ID" value="AAB59401.1"/>
    <property type="status" value="JOINED"/>
    <property type="molecule type" value="Genomic_DNA"/>
</dbReference>
<dbReference type="EMBL" id="AY364535">
    <property type="protein sequence ID" value="AAQ55063.1"/>
    <property type="molecule type" value="Genomic_DNA"/>
</dbReference>
<dbReference type="EMBL" id="Z99572">
    <property type="status" value="NOT_ANNOTATED_CDS"/>
    <property type="molecule type" value="Genomic_DNA"/>
</dbReference>
<dbReference type="EMBL" id="AK291613">
    <property type="protein sequence ID" value="BAF84302.1"/>
    <property type="molecule type" value="mRNA"/>
</dbReference>
<dbReference type="EMBL" id="M14335">
    <property type="protein sequence ID" value="AAB59532.1"/>
    <property type="molecule type" value="mRNA"/>
</dbReference>
<dbReference type="EMBL" id="DQ377944">
    <property type="protein sequence ID" value="ABD23003.1"/>
    <property type="status" value="ALT_SEQ"/>
    <property type="molecule type" value="Genomic_DNA"/>
</dbReference>
<dbReference type="EMBL" id="AJ297255">
    <property type="protein sequence ID" value="CAC82573.1"/>
    <property type="molecule type" value="mRNA"/>
</dbReference>
<dbReference type="CCDS" id="CCDS1281.1"/>
<dbReference type="PIR" id="A56172">
    <property type="entry name" value="KFHU5"/>
</dbReference>
<dbReference type="RefSeq" id="NP_000121.2">
    <property type="nucleotide sequence ID" value="NM_000130.5"/>
</dbReference>
<dbReference type="PDB" id="1CZS">
    <property type="method" value="X-ray"/>
    <property type="resolution" value="1.90 A"/>
    <property type="chains" value="A=2065-2224"/>
</dbReference>
<dbReference type="PDB" id="1CZT">
    <property type="method" value="X-ray"/>
    <property type="resolution" value="1.87 A"/>
    <property type="chains" value="A=2065-2224"/>
</dbReference>
<dbReference type="PDB" id="1CZV">
    <property type="method" value="X-ray"/>
    <property type="resolution" value="2.40 A"/>
    <property type="chains" value="A/B=2065-2224"/>
</dbReference>
<dbReference type="PDB" id="3P6Z">
    <property type="method" value="X-ray"/>
    <property type="resolution" value="1.70 A"/>
    <property type="chains" value="C/I=685-737"/>
</dbReference>
<dbReference type="PDB" id="3P70">
    <property type="method" value="X-ray"/>
    <property type="resolution" value="2.55 A"/>
    <property type="chains" value="M/N/O/P=685-737"/>
</dbReference>
<dbReference type="PDB" id="3S9C">
    <property type="method" value="X-ray"/>
    <property type="resolution" value="1.80 A"/>
    <property type="chains" value="B=1561-1574"/>
</dbReference>
<dbReference type="PDB" id="7KVE">
    <property type="method" value="EM"/>
    <property type="resolution" value="3.30 A"/>
    <property type="chains" value="B=29-2224"/>
</dbReference>
<dbReference type="PDB" id="7KVF">
    <property type="method" value="EM"/>
    <property type="resolution" value="3.60 A"/>
    <property type="chains" value="B=29-2224"/>
</dbReference>
<dbReference type="PDB" id="7KXY">
    <property type="method" value="EM"/>
    <property type="resolution" value="4.40 A"/>
    <property type="chains" value="A=29-737, B=1574-2224"/>
</dbReference>
<dbReference type="PDB" id="7TPP">
    <property type="method" value="EM"/>
    <property type="resolution" value="4.10 A"/>
    <property type="chains" value="C=29-737, D=1574-2224"/>
</dbReference>
<dbReference type="PDB" id="8FDG">
    <property type="method" value="EM"/>
    <property type="resolution" value="3.20 A"/>
    <property type="chains" value="A=29-2224"/>
</dbReference>
<dbReference type="PDB" id="8TN9">
    <property type="method" value="EM"/>
    <property type="resolution" value="3.05 A"/>
    <property type="chains" value="A=29-2224"/>
</dbReference>
<dbReference type="PDB" id="9CTH">
    <property type="method" value="EM"/>
    <property type="resolution" value="6.47 A"/>
    <property type="chains" value="A=29-737, E=1574-2224"/>
</dbReference>
<dbReference type="PDBsum" id="1CZS"/>
<dbReference type="PDBsum" id="1CZT"/>
<dbReference type="PDBsum" id="1CZV"/>
<dbReference type="PDBsum" id="3P6Z"/>
<dbReference type="PDBsum" id="3P70"/>
<dbReference type="PDBsum" id="3S9C"/>
<dbReference type="PDBsum" id="7KVE"/>
<dbReference type="PDBsum" id="7KVF"/>
<dbReference type="PDBsum" id="7KXY"/>
<dbReference type="PDBsum" id="7TPP"/>
<dbReference type="PDBsum" id="8FDG"/>
<dbReference type="PDBsum" id="8TN9"/>
<dbReference type="PDBsum" id="9CTH"/>
<dbReference type="EMDB" id="EMD-23048"/>
<dbReference type="EMDB" id="EMD-23049"/>
<dbReference type="EMDB" id="EMD-23067"/>
<dbReference type="EMDB" id="EMD-26060"/>
<dbReference type="EMDB" id="EMD-26061"/>
<dbReference type="EMDB" id="EMD-29008"/>
<dbReference type="EMDB" id="EMD-29009"/>
<dbReference type="EMDB" id="EMD-29010"/>
<dbReference type="EMDB" id="EMD-29011"/>
<dbReference type="EMDB" id="EMD-41400"/>
<dbReference type="EMDB" id="EMD-41401"/>
<dbReference type="EMDB" id="EMD-41402"/>
<dbReference type="EMDB" id="EMD-41403"/>
<dbReference type="EMDB" id="EMD-41407"/>
<dbReference type="EMDB" id="EMD-41408"/>
<dbReference type="EMDB" id="EMD-41411"/>
<dbReference type="SMR" id="P12259"/>
<dbReference type="BioGRID" id="108452">
    <property type="interactions" value="20"/>
</dbReference>
<dbReference type="ComplexPortal" id="CPX-6216">
    <property type="entry name" value="Coagulation factor Va complex"/>
</dbReference>
<dbReference type="DIP" id="DIP-47331N"/>
<dbReference type="FunCoup" id="P12259">
    <property type="interactions" value="303"/>
</dbReference>
<dbReference type="IntAct" id="P12259">
    <property type="interactions" value="12"/>
</dbReference>
<dbReference type="MINT" id="P12259"/>
<dbReference type="STRING" id="9606.ENSP00000356771"/>
<dbReference type="BindingDB" id="P12259"/>
<dbReference type="ChEMBL" id="CHEMBL3618"/>
<dbReference type="DrugBank" id="DB13151">
    <property type="generic name" value="Anti-inhibitor coagulant complex"/>
</dbReference>
<dbReference type="DrugBank" id="DB09130">
    <property type="generic name" value="Copper"/>
</dbReference>
<dbReference type="DrugBank" id="DB00055">
    <property type="generic name" value="Drotrecogin alfa"/>
</dbReference>
<dbReference type="DrugBank" id="DB11571">
    <property type="generic name" value="Human thrombin"/>
</dbReference>
<dbReference type="DrugBank" id="DB11312">
    <property type="generic name" value="Protein C"/>
</dbReference>
<dbReference type="DrugBank" id="DB13149">
    <property type="generic name" value="Protein S human"/>
</dbReference>
<dbReference type="DrugBank" id="DB11300">
    <property type="generic name" value="Thrombin"/>
</dbReference>
<dbReference type="DrugBank" id="DB11572">
    <property type="generic name" value="Thrombin alfa"/>
</dbReference>
<dbReference type="DrugBank" id="DB05777">
    <property type="generic name" value="Thrombomodulin Alfa"/>
</dbReference>
<dbReference type="CarbonylDB" id="P12259"/>
<dbReference type="GlyConnect" id="1120">
    <property type="glycosylation" value="55 N-Linked glycans (15 sites), 17 O-Linked glycans (26 sites)"/>
</dbReference>
<dbReference type="GlyCosmos" id="P12259">
    <property type="glycosylation" value="59 sites, 24 glycans"/>
</dbReference>
<dbReference type="GlyGen" id="P12259">
    <property type="glycosylation" value="92 sites, 60 N-linked glycans (15 sites), 17 O-linked glycans (62 sites)"/>
</dbReference>
<dbReference type="iPTMnet" id="P12259"/>
<dbReference type="PhosphoSitePlus" id="P12259"/>
<dbReference type="BioMuta" id="F5"/>
<dbReference type="DMDM" id="308153653"/>
<dbReference type="CPTAC" id="non-CPTAC-2648"/>
<dbReference type="jPOST" id="P12259"/>
<dbReference type="MassIVE" id="P12259"/>
<dbReference type="PaxDb" id="9606-ENSP00000356771"/>
<dbReference type="PeptideAtlas" id="P12259"/>
<dbReference type="ProteomicsDB" id="52838"/>
<dbReference type="Antibodypedia" id="863">
    <property type="antibodies" value="404 antibodies from 33 providers"/>
</dbReference>
<dbReference type="DNASU" id="2153"/>
<dbReference type="Ensembl" id="ENST00000367797.9">
    <property type="protein sequence ID" value="ENSP00000356771.3"/>
    <property type="gene ID" value="ENSG00000198734.12"/>
</dbReference>
<dbReference type="GeneID" id="2153"/>
<dbReference type="KEGG" id="hsa:2153"/>
<dbReference type="MANE-Select" id="ENST00000367797.9">
    <property type="protein sequence ID" value="ENSP00000356771.3"/>
    <property type="RefSeq nucleotide sequence ID" value="NM_000130.5"/>
    <property type="RefSeq protein sequence ID" value="NP_000121.2"/>
</dbReference>
<dbReference type="UCSC" id="uc001ggg.2">
    <property type="organism name" value="human"/>
</dbReference>
<dbReference type="AGR" id="HGNC:3542"/>
<dbReference type="CTD" id="2153"/>
<dbReference type="DisGeNET" id="2153"/>
<dbReference type="GeneCards" id="F5"/>
<dbReference type="GeneReviews" id="F5"/>
<dbReference type="HGNC" id="HGNC:3542">
    <property type="gene designation" value="F5"/>
</dbReference>
<dbReference type="HPA" id="ENSG00000198734">
    <property type="expression patterns" value="Group enriched (choroid plexus, liver, placenta)"/>
</dbReference>
<dbReference type="MalaCards" id="F5"/>
<dbReference type="MIM" id="188055">
    <property type="type" value="phenotype"/>
</dbReference>
<dbReference type="MIM" id="227400">
    <property type="type" value="phenotype"/>
</dbReference>
<dbReference type="MIM" id="600880">
    <property type="type" value="phenotype"/>
</dbReference>
<dbReference type="MIM" id="601367">
    <property type="type" value="phenotype"/>
</dbReference>
<dbReference type="MIM" id="612309">
    <property type="type" value="gene"/>
</dbReference>
<dbReference type="MIM" id="614389">
    <property type="type" value="phenotype"/>
</dbReference>
<dbReference type="neXtProt" id="NX_P12259"/>
<dbReference type="OpenTargets" id="ENSG00000198734"/>
<dbReference type="Orphanet" id="131">
    <property type="disease" value="Budd-Chiari syndrome"/>
</dbReference>
<dbReference type="Orphanet" id="329217">
    <property type="disease" value="Cerebral sinovenous thrombosis"/>
</dbReference>
<dbReference type="Orphanet" id="326">
    <property type="disease" value="Congenital factor V deficiency"/>
</dbReference>
<dbReference type="Orphanet" id="391320">
    <property type="disease" value="East Texas bleeding disorder"/>
</dbReference>
<dbReference type="Orphanet" id="599579">
    <property type="disease" value="Factor V Amsterdam bleeding disorder"/>
</dbReference>
<dbReference type="Orphanet" id="600194">
    <property type="disease" value="Factor V Atlanta bleeding disorder"/>
</dbReference>
<dbReference type="PharmGKB" id="PA159"/>
<dbReference type="VEuPathDB" id="HostDB:ENSG00000198734"/>
<dbReference type="eggNOG" id="ENOG502QSUG">
    <property type="taxonomic scope" value="Eukaryota"/>
</dbReference>
<dbReference type="GeneTree" id="ENSGT00940000158556"/>
<dbReference type="HOGENOM" id="CLU_000948_0_0_1"/>
<dbReference type="InParanoid" id="P12259"/>
<dbReference type="OMA" id="YQSNIMS"/>
<dbReference type="OrthoDB" id="2121828at2759"/>
<dbReference type="PAN-GO" id="P12259">
    <property type="GO annotations" value="3 GO annotations based on evolutionary models"/>
</dbReference>
<dbReference type="PhylomeDB" id="P12259"/>
<dbReference type="TreeFam" id="TF329807"/>
<dbReference type="BioCyc" id="MetaCyc:G66-30677-MONOMER"/>
<dbReference type="PathwayCommons" id="P12259"/>
<dbReference type="Reactome" id="R-HSA-114608">
    <property type="pathway name" value="Platelet degranulation"/>
</dbReference>
<dbReference type="Reactome" id="R-HSA-140875">
    <property type="pathway name" value="Common Pathway of Fibrin Clot Formation"/>
</dbReference>
<dbReference type="Reactome" id="R-HSA-204005">
    <property type="pathway name" value="COPII-mediated vesicle transport"/>
</dbReference>
<dbReference type="Reactome" id="R-HSA-381426">
    <property type="pathway name" value="Regulation of Insulin-like Growth Factor (IGF) transport and uptake by Insulin-like Growth Factor Binding Proteins (IGFBPs)"/>
</dbReference>
<dbReference type="Reactome" id="R-HSA-5694530">
    <property type="pathway name" value="Cargo concentration in the ER"/>
</dbReference>
<dbReference type="Reactome" id="R-HSA-8957275">
    <property type="pathway name" value="Post-translational protein phosphorylation"/>
</dbReference>
<dbReference type="SignaLink" id="P12259"/>
<dbReference type="SIGNOR" id="P12259"/>
<dbReference type="BioGRID-ORCS" id="2153">
    <property type="hits" value="9 hits in 1156 CRISPR screens"/>
</dbReference>
<dbReference type="CD-CODE" id="91857CE7">
    <property type="entry name" value="Nucleolus"/>
</dbReference>
<dbReference type="ChiTaRS" id="F5">
    <property type="organism name" value="human"/>
</dbReference>
<dbReference type="EvolutionaryTrace" id="P12259"/>
<dbReference type="GeneWiki" id="Factor_V"/>
<dbReference type="GenomeRNAi" id="2153"/>
<dbReference type="Pharos" id="P12259">
    <property type="development level" value="Tbio"/>
</dbReference>
<dbReference type="PRO" id="PR:P12259"/>
<dbReference type="Proteomes" id="UP000005640">
    <property type="component" value="Chromosome 1"/>
</dbReference>
<dbReference type="RNAct" id="P12259">
    <property type="molecule type" value="protein"/>
</dbReference>
<dbReference type="Bgee" id="ENSG00000198734">
    <property type="expression patterns" value="Expressed in right lobe of liver and 144 other cell types or tissues"/>
</dbReference>
<dbReference type="ExpressionAtlas" id="P12259">
    <property type="expression patterns" value="baseline and differential"/>
</dbReference>
<dbReference type="GO" id="GO:0030134">
    <property type="term" value="C:COPII-coated ER to Golgi transport vesicle"/>
    <property type="evidence" value="ECO:0000304"/>
    <property type="project" value="Reactome"/>
</dbReference>
<dbReference type="GO" id="GO:0005788">
    <property type="term" value="C:endoplasmic reticulum lumen"/>
    <property type="evidence" value="ECO:0000304"/>
    <property type="project" value="Reactome"/>
</dbReference>
<dbReference type="GO" id="GO:0033116">
    <property type="term" value="C:endoplasmic reticulum-Golgi intermediate compartment membrane"/>
    <property type="evidence" value="ECO:0000304"/>
    <property type="project" value="Reactome"/>
</dbReference>
<dbReference type="GO" id="GO:0005576">
    <property type="term" value="C:extracellular region"/>
    <property type="evidence" value="ECO:0000304"/>
    <property type="project" value="Reactome"/>
</dbReference>
<dbReference type="GO" id="GO:0005615">
    <property type="term" value="C:extracellular space"/>
    <property type="evidence" value="ECO:0007669"/>
    <property type="project" value="Ensembl"/>
</dbReference>
<dbReference type="GO" id="GO:1903561">
    <property type="term" value="C:extracellular vesicle"/>
    <property type="evidence" value="ECO:0007005"/>
    <property type="project" value="UniProtKB"/>
</dbReference>
<dbReference type="GO" id="GO:0016020">
    <property type="term" value="C:membrane"/>
    <property type="evidence" value="ECO:0007005"/>
    <property type="project" value="UniProtKB"/>
</dbReference>
<dbReference type="GO" id="GO:0005886">
    <property type="term" value="C:plasma membrane"/>
    <property type="evidence" value="ECO:0000304"/>
    <property type="project" value="Reactome"/>
</dbReference>
<dbReference type="GO" id="GO:0031091">
    <property type="term" value="C:platelet alpha granule"/>
    <property type="evidence" value="ECO:0000318"/>
    <property type="project" value="GO_Central"/>
</dbReference>
<dbReference type="GO" id="GO:0031093">
    <property type="term" value="C:platelet alpha granule lumen"/>
    <property type="evidence" value="ECO:0000304"/>
    <property type="project" value="Reactome"/>
</dbReference>
<dbReference type="GO" id="GO:0005507">
    <property type="term" value="F:copper ion binding"/>
    <property type="evidence" value="ECO:0007669"/>
    <property type="project" value="InterPro"/>
</dbReference>
<dbReference type="GO" id="GO:0008015">
    <property type="term" value="P:blood circulation"/>
    <property type="evidence" value="ECO:0000318"/>
    <property type="project" value="GO_Central"/>
</dbReference>
<dbReference type="GO" id="GO:0007596">
    <property type="term" value="P:blood coagulation"/>
    <property type="evidence" value="ECO:0000318"/>
    <property type="project" value="GO_Central"/>
</dbReference>
<dbReference type="GO" id="GO:0032571">
    <property type="term" value="P:response to vitamin K"/>
    <property type="evidence" value="ECO:0007669"/>
    <property type="project" value="Ensembl"/>
</dbReference>
<dbReference type="CDD" id="cd14450">
    <property type="entry name" value="CuRO_3_FV_like"/>
    <property type="match status" value="1"/>
</dbReference>
<dbReference type="CDD" id="cd14454">
    <property type="entry name" value="CuRO_4_FV_like"/>
    <property type="match status" value="1"/>
</dbReference>
<dbReference type="CDD" id="cd14451">
    <property type="entry name" value="CuRO_5_FV_like"/>
    <property type="match status" value="1"/>
</dbReference>
<dbReference type="CDD" id="cd00057">
    <property type="entry name" value="FA58C"/>
    <property type="match status" value="2"/>
</dbReference>
<dbReference type="FunFam" id="2.60.40.420:FF:000056">
    <property type="entry name" value="Coagulation factor V"/>
    <property type="match status" value="1"/>
</dbReference>
<dbReference type="FunFam" id="2.60.40.420:FF:000050">
    <property type="entry name" value="coagulation factor V isoform X1"/>
    <property type="match status" value="1"/>
</dbReference>
<dbReference type="FunFam" id="2.60.40.420:FF:000068">
    <property type="entry name" value="coagulation factor V isoform X1"/>
    <property type="match status" value="1"/>
</dbReference>
<dbReference type="FunFam" id="2.60.120.260:FF:000002">
    <property type="entry name" value="Coagulation factor VIII"/>
    <property type="match status" value="2"/>
</dbReference>
<dbReference type="FunFam" id="2.60.40.420:FF:000011">
    <property type="entry name" value="Coagulation factor VIII (Predicted)"/>
    <property type="match status" value="2"/>
</dbReference>
<dbReference type="Gene3D" id="2.60.40.420">
    <property type="entry name" value="Cupredoxins - blue copper proteins"/>
    <property type="match status" value="5"/>
</dbReference>
<dbReference type="Gene3D" id="2.60.120.260">
    <property type="entry name" value="Galactose-binding domain-like"/>
    <property type="match status" value="2"/>
</dbReference>
<dbReference type="InterPro" id="IPR011707">
    <property type="entry name" value="Cu-oxidase-like_N"/>
</dbReference>
<dbReference type="InterPro" id="IPR033138">
    <property type="entry name" value="Cu_oxidase_CS"/>
</dbReference>
<dbReference type="InterPro" id="IPR008972">
    <property type="entry name" value="Cupredoxin"/>
</dbReference>
<dbReference type="InterPro" id="IPR000421">
    <property type="entry name" value="FA58C"/>
</dbReference>
<dbReference type="InterPro" id="IPR024715">
    <property type="entry name" value="Factor_5/8-like"/>
</dbReference>
<dbReference type="InterPro" id="IPR008979">
    <property type="entry name" value="Galactose-bd-like_sf"/>
</dbReference>
<dbReference type="InterPro" id="IPR050633">
    <property type="entry name" value="Neuropilin_MCO_CoagFactor"/>
</dbReference>
<dbReference type="PANTHER" id="PTHR46806:SF10">
    <property type="entry name" value="COAGULATION FACTOR V"/>
    <property type="match status" value="1"/>
</dbReference>
<dbReference type="PANTHER" id="PTHR46806">
    <property type="entry name" value="F5/8 TYPE C DOMAIN-CONTAINING PROTEIN"/>
    <property type="match status" value="1"/>
</dbReference>
<dbReference type="Pfam" id="PF07732">
    <property type="entry name" value="Cu-oxidase_3"/>
    <property type="match status" value="2"/>
</dbReference>
<dbReference type="Pfam" id="PF00754">
    <property type="entry name" value="F5_F8_type_C"/>
    <property type="match status" value="2"/>
</dbReference>
<dbReference type="PIRSF" id="PIRSF000354">
    <property type="entry name" value="Factors_V_VIII"/>
    <property type="match status" value="1"/>
</dbReference>
<dbReference type="SMART" id="SM00231">
    <property type="entry name" value="FA58C"/>
    <property type="match status" value="2"/>
</dbReference>
<dbReference type="SUPFAM" id="SSF49503">
    <property type="entry name" value="Cupredoxins"/>
    <property type="match status" value="6"/>
</dbReference>
<dbReference type="SUPFAM" id="SSF49785">
    <property type="entry name" value="Galactose-binding domain-like"/>
    <property type="match status" value="2"/>
</dbReference>
<dbReference type="PROSITE" id="PS01285">
    <property type="entry name" value="FA58C_1"/>
    <property type="match status" value="2"/>
</dbReference>
<dbReference type="PROSITE" id="PS01286">
    <property type="entry name" value="FA58C_2"/>
    <property type="match status" value="2"/>
</dbReference>
<dbReference type="PROSITE" id="PS50022">
    <property type="entry name" value="FA58C_3"/>
    <property type="match status" value="2"/>
</dbReference>
<dbReference type="PROSITE" id="PS00079">
    <property type="entry name" value="MULTICOPPER_OXIDASE1"/>
    <property type="match status" value="2"/>
</dbReference>